<gene>
    <name type="primary">TNF</name>
    <name type="synonym">TNFA</name>
    <name type="synonym">TNFSF2</name>
</gene>
<feature type="chain" id="PRO_0000034423" description="Tumor necrosis factor, membrane form">
    <location>
        <begin position="1"/>
        <end position="233"/>
    </location>
</feature>
<feature type="chain" id="PRO_0000417231" description="Intracellular domain 1">
    <location>
        <begin position="1"/>
        <end position="39"/>
    </location>
</feature>
<feature type="chain" id="PRO_0000417232" description="Intracellular domain 2">
    <location>
        <begin position="1"/>
        <end position="35"/>
    </location>
</feature>
<feature type="chain" id="PRO_0000417233" description="C-domain 1">
    <location>
        <begin position="50"/>
        <end status="unknown"/>
    </location>
</feature>
<feature type="chain" id="PRO_0000417234" description="C-domain 2">
    <location>
        <begin position="52"/>
        <end status="unknown"/>
    </location>
</feature>
<feature type="chain" id="PRO_0000034424" description="Tumor necrosis factor, soluble form" evidence="14">
    <location>
        <begin position="77"/>
        <end position="233"/>
    </location>
</feature>
<feature type="topological domain" description="Cytoplasmic" evidence="2">
    <location>
        <begin position="1"/>
        <end position="35"/>
    </location>
</feature>
<feature type="transmembrane region" description="Helical; Signal-anchor for type II membrane protein" evidence="2">
    <location>
        <begin position="36"/>
        <end position="56"/>
    </location>
</feature>
<feature type="topological domain" description="Extracellular" evidence="2">
    <location>
        <begin position="57"/>
        <end position="233"/>
    </location>
</feature>
<feature type="domain" description="THD" evidence="3">
    <location>
        <begin position="88"/>
        <end position="233"/>
    </location>
</feature>
<feature type="site" description="Cleavage; by SPPL2A or SPPL2B">
    <location>
        <begin position="35"/>
        <end position="36"/>
    </location>
</feature>
<feature type="site" description="Cleavage; by SPPL2A or SPPL2B">
    <location>
        <begin position="39"/>
        <end position="40"/>
    </location>
</feature>
<feature type="site" description="Cleavage; by SPPL2A or SPPL2B">
    <location>
        <begin position="49"/>
        <end position="50"/>
    </location>
</feature>
<feature type="site" description="Cleavage; by SPPL2A or SPPL2B">
    <location>
        <begin position="51"/>
        <end position="52"/>
    </location>
</feature>
<feature type="site" description="Cleavage; by ADAM17">
    <location>
        <begin position="76"/>
        <end position="77"/>
    </location>
</feature>
<feature type="modified residue" description="Phosphoserine; by CK1" evidence="20">
    <location>
        <position position="2"/>
    </location>
</feature>
<feature type="lipid moiety-binding region" description="N6-myristoyl lysine" evidence="7 13">
    <location>
        <position position="19"/>
    </location>
</feature>
<feature type="lipid moiety-binding region" description="N6-myristoyl lysine" evidence="7 13">
    <location>
        <position position="20"/>
    </location>
</feature>
<feature type="glycosylation site" description="O-linked (GalNAc...) serine; in soluble form" evidence="17">
    <location>
        <position position="80"/>
    </location>
</feature>
<feature type="disulfide bond" evidence="3">
    <location>
        <begin position="145"/>
        <end position="177"/>
    </location>
</feature>
<feature type="sequence variant" id="VAR_019378" description="In dbSNP:rs4645843." evidence="19">
    <original>P</original>
    <variation>L</variation>
    <location>
        <position position="84"/>
    </location>
</feature>
<feature type="sequence variant" id="VAR_011927" description="In dbSNP:rs1800620.">
    <original>A</original>
    <variation>T</variation>
    <location>
        <position position="94"/>
    </location>
</feature>
<feature type="mutagenesis site" description="Abolished myristoylation." evidence="13">
    <original>KK</original>
    <variation>RR</variation>
    <location>
        <begin position="19"/>
        <end position="20"/>
    </location>
</feature>
<feature type="mutagenesis site" description="Low activity." evidence="10">
    <original>L</original>
    <variation>S</variation>
    <location>
        <position position="105"/>
    </location>
</feature>
<feature type="mutagenesis site" description="Biologically inactive." evidence="10">
    <original>R</original>
    <variation>W</variation>
    <location>
        <position position="108"/>
    </location>
</feature>
<feature type="mutagenesis site" description="Biologically inactive." evidence="10">
    <original>L</original>
    <variation>F</variation>
    <location>
        <position position="112"/>
    </location>
</feature>
<feature type="mutagenesis site" description="Biologically inactive." evidence="10">
    <original>A</original>
    <variation>V</variation>
    <location>
        <position position="160"/>
    </location>
</feature>
<feature type="mutagenesis site" description="Biologically inactive." evidence="10">
    <original>S</original>
    <variation>F</variation>
    <location>
        <position position="162"/>
    </location>
</feature>
<feature type="mutagenesis site" description="Biologically inactive." evidence="10">
    <original>V</original>
    <variation>A</variation>
    <variation>D</variation>
    <location>
        <position position="167"/>
    </location>
</feature>
<feature type="mutagenesis site" description="Biologically inactive." evidence="10">
    <original>E</original>
    <variation>K</variation>
    <location>
        <position position="222"/>
    </location>
</feature>
<feature type="sequence conflict" description="In Ref. 5; AAA61198." evidence="20" ref="5">
    <original>F</original>
    <variation>S</variation>
    <location>
        <position position="63"/>
    </location>
</feature>
<feature type="sequence conflict" description="In Ref. 17; AAF71992." evidence="20" ref="17">
    <original>PSD</original>
    <variation>VNR</variation>
    <location>
        <begin position="84"/>
        <end position="86"/>
    </location>
</feature>
<feature type="sequence conflict" description="In Ref. 16; AAC03542." evidence="20" ref="16">
    <original>E</original>
    <variation>R</variation>
    <location>
        <position position="183"/>
    </location>
</feature>
<feature type="helix" evidence="28">
    <location>
        <begin position="32"/>
        <end position="35"/>
    </location>
</feature>
<feature type="helix" evidence="28">
    <location>
        <begin position="37"/>
        <end position="53"/>
    </location>
</feature>
<feature type="turn" evidence="29">
    <location>
        <begin position="84"/>
        <end position="86"/>
    </location>
</feature>
<feature type="strand" evidence="27">
    <location>
        <begin position="89"/>
        <end position="94"/>
    </location>
</feature>
<feature type="strand" evidence="25">
    <location>
        <begin position="96"/>
        <end position="98"/>
    </location>
</feature>
<feature type="strand" evidence="27">
    <location>
        <begin position="99"/>
        <end position="101"/>
    </location>
</feature>
<feature type="strand" evidence="22">
    <location>
        <begin position="104"/>
        <end position="106"/>
    </location>
</feature>
<feature type="strand" evidence="26">
    <location>
        <begin position="108"/>
        <end position="110"/>
    </location>
</feature>
<feature type="strand" evidence="27">
    <location>
        <begin position="112"/>
        <end position="114"/>
    </location>
</feature>
<feature type="strand" evidence="27">
    <location>
        <begin position="118"/>
        <end position="120"/>
    </location>
</feature>
<feature type="strand" evidence="27">
    <location>
        <begin position="123"/>
        <end position="125"/>
    </location>
</feature>
<feature type="strand" evidence="27">
    <location>
        <begin position="128"/>
        <end position="143"/>
    </location>
</feature>
<feature type="strand" evidence="23">
    <location>
        <begin position="146"/>
        <end position="148"/>
    </location>
</feature>
<feature type="strand" evidence="27">
    <location>
        <begin position="152"/>
        <end position="159"/>
    </location>
</feature>
<feature type="strand" evidence="27">
    <location>
        <begin position="161"/>
        <end position="163"/>
    </location>
</feature>
<feature type="strand" evidence="27">
    <location>
        <begin position="166"/>
        <end position="174"/>
    </location>
</feature>
<feature type="strand" evidence="21">
    <location>
        <begin position="177"/>
        <end position="179"/>
    </location>
</feature>
<feature type="strand" evidence="24">
    <location>
        <begin position="182"/>
        <end position="185"/>
    </location>
</feature>
<feature type="strand" evidence="27">
    <location>
        <begin position="189"/>
        <end position="202"/>
    </location>
</feature>
<feature type="strand" evidence="27">
    <location>
        <begin position="207"/>
        <end position="213"/>
    </location>
</feature>
<feature type="helix" evidence="27">
    <location>
        <begin position="215"/>
        <end position="217"/>
    </location>
</feature>
<feature type="turn" evidence="29">
    <location>
        <begin position="221"/>
        <end position="224"/>
    </location>
</feature>
<feature type="strand" evidence="27">
    <location>
        <begin position="225"/>
        <end position="232"/>
    </location>
</feature>
<keyword id="KW-0002">3D-structure</keyword>
<keyword id="KW-1003">Cell membrane</keyword>
<keyword id="KW-0202">Cytokine</keyword>
<keyword id="KW-0903">Direct protein sequencing</keyword>
<keyword id="KW-1015">Disulfide bond</keyword>
<keyword id="KW-0325">Glycoprotein</keyword>
<keyword id="KW-0449">Lipoprotein</keyword>
<keyword id="KW-0472">Membrane</keyword>
<keyword id="KW-0519">Myristate</keyword>
<keyword id="KW-0597">Phosphoprotein</keyword>
<keyword id="KW-1267">Proteomics identification</keyword>
<keyword id="KW-1185">Reference proteome</keyword>
<keyword id="KW-0964">Secreted</keyword>
<keyword id="KW-0735">Signal-anchor</keyword>
<keyword id="KW-0812">Transmembrane</keyword>
<keyword id="KW-1133">Transmembrane helix</keyword>
<dbReference type="EMBL" id="M16441">
    <property type="protein sequence ID" value="AAA61200.1"/>
    <property type="molecule type" value="Genomic_DNA"/>
</dbReference>
<dbReference type="EMBL" id="X02910">
    <property type="protein sequence ID" value="CAA26669.1"/>
    <property type="molecule type" value="Genomic_DNA"/>
</dbReference>
<dbReference type="EMBL" id="X01394">
    <property type="protein sequence ID" value="CAA25650.1"/>
    <property type="molecule type" value="mRNA"/>
</dbReference>
<dbReference type="EMBL" id="M10988">
    <property type="protein sequence ID" value="AAA61198.1"/>
    <property type="molecule type" value="mRNA"/>
</dbReference>
<dbReference type="EMBL" id="M26331">
    <property type="protein sequence ID" value="AAA36758.1"/>
    <property type="molecule type" value="Genomic_DNA"/>
</dbReference>
<dbReference type="EMBL" id="Z15026">
    <property type="protein sequence ID" value="CAA78745.1"/>
    <property type="molecule type" value="Genomic_DNA"/>
</dbReference>
<dbReference type="EMBL" id="Y14768">
    <property type="protein sequence ID" value="CAA75070.1"/>
    <property type="status" value="ALT_SEQ"/>
    <property type="molecule type" value="Genomic_DNA"/>
</dbReference>
<dbReference type="EMBL" id="AF129756">
    <property type="protein sequence ID" value="AAD18091.1"/>
    <property type="molecule type" value="Genomic_DNA"/>
</dbReference>
<dbReference type="EMBL" id="BA000025">
    <property type="protein sequence ID" value="BAB63396.1"/>
    <property type="molecule type" value="Genomic_DNA"/>
</dbReference>
<dbReference type="EMBL" id="AB088112">
    <property type="protein sequence ID" value="BAC54944.1"/>
    <property type="molecule type" value="Genomic_DNA"/>
</dbReference>
<dbReference type="EMBL" id="AY066019">
    <property type="protein sequence ID" value="AAL47581.1"/>
    <property type="molecule type" value="Genomic_DNA"/>
</dbReference>
<dbReference type="EMBL" id="AY214167">
    <property type="protein sequence ID" value="AAO21132.1"/>
    <property type="molecule type" value="Genomic_DNA"/>
</dbReference>
<dbReference type="EMBL" id="BC028148">
    <property type="protein sequence ID" value="AAH28148.1"/>
    <property type="molecule type" value="mRNA"/>
</dbReference>
<dbReference type="EMBL" id="AF043342">
    <property type="protein sequence ID" value="AAC03542.1"/>
    <property type="molecule type" value="mRNA"/>
</dbReference>
<dbReference type="EMBL" id="AF098751">
    <property type="protein sequence ID" value="AAF71992.1"/>
    <property type="status" value="ALT_FRAME"/>
    <property type="molecule type" value="mRNA"/>
</dbReference>
<dbReference type="CCDS" id="CCDS4702.1"/>
<dbReference type="PIR" id="A93585">
    <property type="entry name" value="QWHUN"/>
</dbReference>
<dbReference type="RefSeq" id="NP_000585.2">
    <property type="nucleotide sequence ID" value="NM_000594.3"/>
</dbReference>
<dbReference type="PDB" id="1A8M">
    <property type="method" value="X-ray"/>
    <property type="resolution" value="2.30 A"/>
    <property type="chains" value="A/B/C=77-233"/>
</dbReference>
<dbReference type="PDB" id="1TNF">
    <property type="method" value="X-ray"/>
    <property type="resolution" value="2.60 A"/>
    <property type="chains" value="A/B/C=77-233"/>
</dbReference>
<dbReference type="PDB" id="2AZ5">
    <property type="method" value="X-ray"/>
    <property type="resolution" value="2.10 A"/>
    <property type="chains" value="A/B/C/D=86-233"/>
</dbReference>
<dbReference type="PDB" id="2E7A">
    <property type="method" value="X-ray"/>
    <property type="resolution" value="1.80 A"/>
    <property type="chains" value="A/B/C=77-233"/>
</dbReference>
<dbReference type="PDB" id="2TUN">
    <property type="method" value="X-ray"/>
    <property type="resolution" value="3.10 A"/>
    <property type="chains" value="A/B/C/D/E/F=77-233"/>
</dbReference>
<dbReference type="PDB" id="2ZJC">
    <property type="method" value="X-ray"/>
    <property type="resolution" value="2.50 A"/>
    <property type="chains" value="A/B/C=77-233"/>
</dbReference>
<dbReference type="PDB" id="2ZPX">
    <property type="method" value="X-ray"/>
    <property type="resolution" value="2.83 A"/>
    <property type="chains" value="A/B/C=77-233"/>
</dbReference>
<dbReference type="PDB" id="3ALQ">
    <property type="method" value="X-ray"/>
    <property type="resolution" value="3.00 A"/>
    <property type="chains" value="A/B/C/D/E/F=77-233"/>
</dbReference>
<dbReference type="PDB" id="3IT8">
    <property type="method" value="X-ray"/>
    <property type="resolution" value="2.80 A"/>
    <property type="chains" value="A/B/C/G/H/I=82-233"/>
</dbReference>
<dbReference type="PDB" id="3L9J">
    <property type="method" value="X-ray"/>
    <property type="resolution" value="2.10 A"/>
    <property type="chains" value="T=85-233"/>
</dbReference>
<dbReference type="PDB" id="3WD5">
    <property type="method" value="X-ray"/>
    <property type="resolution" value="3.10 A"/>
    <property type="chains" value="A=77-233"/>
</dbReference>
<dbReference type="PDB" id="4G3Y">
    <property type="method" value="X-ray"/>
    <property type="resolution" value="2.60 A"/>
    <property type="chains" value="C=77-233"/>
</dbReference>
<dbReference type="PDB" id="4TSV">
    <property type="method" value="X-ray"/>
    <property type="resolution" value="1.80 A"/>
    <property type="chains" value="A=84-233"/>
</dbReference>
<dbReference type="PDB" id="4TWT">
    <property type="method" value="X-ray"/>
    <property type="resolution" value="2.85 A"/>
    <property type="chains" value="A/B/C/D=77-233"/>
</dbReference>
<dbReference type="PDB" id="4Y6O">
    <property type="method" value="X-ray"/>
    <property type="resolution" value="1.60 A"/>
    <property type="chains" value="C/D=17-23"/>
</dbReference>
<dbReference type="PDB" id="5M2I">
    <property type="method" value="X-ray"/>
    <property type="resolution" value="2.15 A"/>
    <property type="chains" value="A/B/C/D/E/F=77-233"/>
</dbReference>
<dbReference type="PDB" id="5M2J">
    <property type="method" value="X-ray"/>
    <property type="resolution" value="1.90 A"/>
    <property type="chains" value="A=77-233"/>
</dbReference>
<dbReference type="PDB" id="5M2M">
    <property type="method" value="X-ray"/>
    <property type="resolution" value="2.30 A"/>
    <property type="chains" value="A/B/C/G/I/M=77-233"/>
</dbReference>
<dbReference type="PDB" id="5MU8">
    <property type="method" value="X-ray"/>
    <property type="resolution" value="3.00 A"/>
    <property type="chains" value="A/B/C/D/F/G/H/I/J/K/L/M/N/O/P/Q/R/S/T/U/V/W/X/Y/Z/a/b/c/d/e=77-233"/>
</dbReference>
<dbReference type="PDB" id="5TSW">
    <property type="method" value="X-ray"/>
    <property type="resolution" value="2.50 A"/>
    <property type="chains" value="A/B/C/D/E/F=84-233"/>
</dbReference>
<dbReference type="PDB" id="5UUI">
    <property type="method" value="X-ray"/>
    <property type="resolution" value="1.40 A"/>
    <property type="chains" value="A=77-233"/>
</dbReference>
<dbReference type="PDB" id="5WUX">
    <property type="method" value="X-ray"/>
    <property type="resolution" value="2.90 A"/>
    <property type="chains" value="E/F/G=77-233"/>
</dbReference>
<dbReference type="PDB" id="5YOY">
    <property type="method" value="X-ray"/>
    <property type="resolution" value="2.73 A"/>
    <property type="chains" value="A/B/C/J/K/L=76-233"/>
</dbReference>
<dbReference type="PDB" id="6OOY">
    <property type="method" value="X-ray"/>
    <property type="resolution" value="2.50 A"/>
    <property type="chains" value="A/B/C=77-233"/>
</dbReference>
<dbReference type="PDB" id="6OOZ">
    <property type="method" value="X-ray"/>
    <property type="resolution" value="2.80 A"/>
    <property type="chains" value="A/B/C=77-233"/>
</dbReference>
<dbReference type="PDB" id="6OP0">
    <property type="method" value="X-ray"/>
    <property type="resolution" value="2.55 A"/>
    <property type="chains" value="A/B/C=77-233"/>
</dbReference>
<dbReference type="PDB" id="6RMJ">
    <property type="method" value="X-ray"/>
    <property type="resolution" value="2.65 A"/>
    <property type="chains" value="A/B/C=77-233"/>
</dbReference>
<dbReference type="PDB" id="6X81">
    <property type="method" value="X-ray"/>
    <property type="resolution" value="2.81 A"/>
    <property type="chains" value="A/B/C/D/E/F=77-233"/>
</dbReference>
<dbReference type="PDB" id="6X82">
    <property type="method" value="X-ray"/>
    <property type="resolution" value="2.75 A"/>
    <property type="chains" value="A/B/C/D/E/F=77-233"/>
</dbReference>
<dbReference type="PDB" id="6X83">
    <property type="method" value="X-ray"/>
    <property type="resolution" value="2.83 A"/>
    <property type="chains" value="A/B/C/D/E/F=77-233"/>
</dbReference>
<dbReference type="PDB" id="6X85">
    <property type="method" value="X-ray"/>
    <property type="resolution" value="2.85 A"/>
    <property type="chains" value="A/B/C/D/E/F=77-233"/>
</dbReference>
<dbReference type="PDB" id="6X86">
    <property type="method" value="X-ray"/>
    <property type="resolution" value="2.93 A"/>
    <property type="chains" value="A/B/C/D/E/F=77-233"/>
</dbReference>
<dbReference type="PDB" id="7ASY">
    <property type="method" value="NMR"/>
    <property type="chains" value="A=28-60"/>
</dbReference>
<dbReference type="PDB" id="7AT7">
    <property type="method" value="NMR"/>
    <property type="chains" value="A=28-60"/>
</dbReference>
<dbReference type="PDB" id="7ATB">
    <property type="method" value="NMR"/>
    <property type="chains" value="A=28-60"/>
</dbReference>
<dbReference type="PDB" id="7JRA">
    <property type="method" value="X-ray"/>
    <property type="resolution" value="2.10 A"/>
    <property type="chains" value="A/B/C=77-233"/>
</dbReference>
<dbReference type="PDB" id="7KP9">
    <property type="method" value="X-ray"/>
    <property type="resolution" value="2.15 A"/>
    <property type="chains" value="A/B/C=77-233"/>
</dbReference>
<dbReference type="PDB" id="7KPA">
    <property type="method" value="X-ray"/>
    <property type="resolution" value="2.30 A"/>
    <property type="chains" value="A/B/C=77-233"/>
</dbReference>
<dbReference type="PDB" id="7KPB">
    <property type="method" value="X-ray"/>
    <property type="resolution" value="3.00 A"/>
    <property type="chains" value="A/B/C=77-233"/>
</dbReference>
<dbReference type="PDB" id="7QLF">
    <property type="method" value="NMR"/>
    <property type="chains" value="A=178-191"/>
</dbReference>
<dbReference type="PDB" id="7TA3">
    <property type="method" value="X-ray"/>
    <property type="resolution" value="2.50 A"/>
    <property type="chains" value="B/D=77-233"/>
</dbReference>
<dbReference type="PDB" id="7TA6">
    <property type="method" value="X-ray"/>
    <property type="resolution" value="2.67 A"/>
    <property type="chains" value="A/B/C/D/E/F/G/H=77-233"/>
</dbReference>
<dbReference type="PDB" id="8Z8M">
    <property type="method" value="X-ray"/>
    <property type="resolution" value="2.59 A"/>
    <property type="chains" value="A/C/E/G/I/K=77-233"/>
</dbReference>
<dbReference type="PDBsum" id="1A8M"/>
<dbReference type="PDBsum" id="1TNF"/>
<dbReference type="PDBsum" id="2AZ5"/>
<dbReference type="PDBsum" id="2E7A"/>
<dbReference type="PDBsum" id="2TUN"/>
<dbReference type="PDBsum" id="2ZJC"/>
<dbReference type="PDBsum" id="2ZPX"/>
<dbReference type="PDBsum" id="3ALQ"/>
<dbReference type="PDBsum" id="3IT8"/>
<dbReference type="PDBsum" id="3L9J"/>
<dbReference type="PDBsum" id="3WD5"/>
<dbReference type="PDBsum" id="4G3Y"/>
<dbReference type="PDBsum" id="4TSV"/>
<dbReference type="PDBsum" id="4TWT"/>
<dbReference type="PDBsum" id="4Y6O"/>
<dbReference type="PDBsum" id="5M2I"/>
<dbReference type="PDBsum" id="5M2J"/>
<dbReference type="PDBsum" id="5M2M"/>
<dbReference type="PDBsum" id="5MU8"/>
<dbReference type="PDBsum" id="5TSW"/>
<dbReference type="PDBsum" id="5UUI"/>
<dbReference type="PDBsum" id="5WUX"/>
<dbReference type="PDBsum" id="5YOY"/>
<dbReference type="PDBsum" id="6OOY"/>
<dbReference type="PDBsum" id="6OOZ"/>
<dbReference type="PDBsum" id="6OP0"/>
<dbReference type="PDBsum" id="6RMJ"/>
<dbReference type="PDBsum" id="6X81"/>
<dbReference type="PDBsum" id="6X82"/>
<dbReference type="PDBsum" id="6X83"/>
<dbReference type="PDBsum" id="6X85"/>
<dbReference type="PDBsum" id="6X86"/>
<dbReference type="PDBsum" id="7ASY"/>
<dbReference type="PDBsum" id="7AT7"/>
<dbReference type="PDBsum" id="7ATB"/>
<dbReference type="PDBsum" id="7JRA"/>
<dbReference type="PDBsum" id="7KP9"/>
<dbReference type="PDBsum" id="7KPA"/>
<dbReference type="PDBsum" id="7KPB"/>
<dbReference type="PDBsum" id="7QLF"/>
<dbReference type="PDBsum" id="7TA3"/>
<dbReference type="PDBsum" id="7TA6"/>
<dbReference type="PDBsum" id="8Z8M"/>
<dbReference type="SMR" id="P01375"/>
<dbReference type="BioGRID" id="112979">
    <property type="interactions" value="348"/>
</dbReference>
<dbReference type="ComplexPortal" id="CPX-2805">
    <property type="entry name" value="sTNF:TNR1B receptor-ligand complex"/>
</dbReference>
<dbReference type="ComplexPortal" id="CPX-8826">
    <property type="entry name" value="Soluble tumor necrosis factor complex"/>
</dbReference>
<dbReference type="ComplexPortal" id="CPX-8931">
    <property type="entry name" value="Transmembrane tumor necrosis factor complex"/>
</dbReference>
<dbReference type="CORUM" id="P01375"/>
<dbReference type="DIP" id="DIP-2895N"/>
<dbReference type="FunCoup" id="P01375">
    <property type="interactions" value="1671"/>
</dbReference>
<dbReference type="IntAct" id="P01375">
    <property type="interactions" value="122"/>
</dbReference>
<dbReference type="MINT" id="P01375"/>
<dbReference type="STRING" id="9606.ENSP00000398698"/>
<dbReference type="BindingDB" id="P01375"/>
<dbReference type="ChEMBL" id="CHEMBL1825"/>
<dbReference type="DrugBank" id="DB07145">
    <property type="generic name" value="(2R)-N-HYDROXY-2-[(3S)-3-METHYL-3-{4-[(2-METHYLQUINOLIN-4-YL)METHOXY]PHENYL}-2-OXOPYRROLIDIN-1-YL]PROPANAMIDE"/>
</dbReference>
<dbReference type="DrugBank" id="DB00051">
    <property type="generic name" value="Adalimumab"/>
</dbReference>
<dbReference type="DrugBank" id="DB04956">
    <property type="generic name" value="Afelimomab"/>
</dbReference>
<dbReference type="DrugBank" id="DB05879">
    <property type="generic name" value="AME-527"/>
</dbReference>
<dbReference type="DrugBank" id="DB01427">
    <property type="generic name" value="Amrinone"/>
</dbReference>
<dbReference type="DrugBank" id="DB05767">
    <property type="generic name" value="Andrographolide"/>
</dbReference>
<dbReference type="DrugBank" id="DB05513">
    <property type="generic name" value="Atiprimod"/>
</dbReference>
<dbReference type="DrugBank" id="DB16101">
    <property type="generic name" value="Baicalein"/>
</dbReference>
<dbReference type="DrugBank" id="DB11752">
    <property type="generic name" value="Bryostatin 1"/>
</dbReference>
<dbReference type="DrugBank" id="DB18736">
    <property type="generic name" value="Celastrol"/>
</dbReference>
<dbReference type="DrugBank" id="DB08904">
    <property type="generic name" value="Certolizumab pegol"/>
</dbReference>
<dbReference type="DrugBank" id="DB00608">
    <property type="generic name" value="Chloroquine"/>
</dbReference>
<dbReference type="DrugBank" id="DB01407">
    <property type="generic name" value="Clenbuterol"/>
</dbReference>
<dbReference type="DrugBank" id="DB05744">
    <property type="generic name" value="CRx-139"/>
</dbReference>
<dbReference type="DrugBank" id="DB05758">
    <property type="generic name" value="CYT007-TNFQb"/>
</dbReference>
<dbReference type="DrugBank" id="DB06444">
    <property type="generic name" value="Dexanabinol"/>
</dbReference>
<dbReference type="DrugBank" id="DB12140">
    <property type="generic name" value="Dilmapimod"/>
</dbReference>
<dbReference type="DrugBank" id="DB00668">
    <property type="generic name" value="Epinephrine"/>
</dbReference>
<dbReference type="DrugBank" id="DB00005">
    <property type="generic name" value="Etanercept"/>
</dbReference>
<dbReference type="DrugBank" id="DB05869">
    <property type="generic name" value="Ethyl pyruvate"/>
</dbReference>
<dbReference type="DrugBank" id="DB10770">
    <property type="generic name" value="Foreskin fibroblast (neonatal)"/>
</dbReference>
<dbReference type="DrugBank" id="DB10772">
    <property type="generic name" value="Foreskin keratinocyte (neonatal)"/>
</dbReference>
<dbReference type="DrugBank" id="DB13751">
    <property type="generic name" value="Glycyrrhizic acid"/>
</dbReference>
<dbReference type="DrugBank" id="DB06674">
    <property type="generic name" value="Golimumab"/>
</dbReference>
<dbReference type="DrugBank" id="DB00065">
    <property type="generic name" value="Infliximab"/>
</dbReference>
<dbReference type="DrugBank" id="DB02325">
    <property type="generic name" value="Isopropyl alcohol"/>
</dbReference>
<dbReference type="DrugBank" id="DB12193">
    <property type="generic name" value="Lenabasum"/>
</dbReference>
<dbReference type="DrugBank" id="DB00480">
    <property type="generic name" value="Lenalidomide"/>
</dbReference>
<dbReference type="DrugBank" id="DB12598">
    <property type="generic name" value="Nafamostat"/>
</dbReference>
<dbReference type="DrugBank" id="DB05303">
    <property type="generic name" value="OMS-103HP"/>
</dbReference>
<dbReference type="DrugBank" id="DB06495">
    <property type="generic name" value="Onercept"/>
</dbReference>
<dbReference type="DrugBank" id="DB11669">
    <property type="generic name" value="Ortataxel"/>
</dbReference>
<dbReference type="DrugBank" id="DB00806">
    <property type="generic name" value="Pentoxifylline"/>
</dbReference>
<dbReference type="DrugBank" id="DB05992">
    <property type="generic name" value="Plinabulin"/>
</dbReference>
<dbReference type="DrugBank" id="DB05218">
    <property type="generic name" value="PN0621"/>
</dbReference>
<dbReference type="DrugBank" id="DB09221">
    <property type="generic name" value="Polaprezinc"/>
</dbReference>
<dbReference type="DrugBank" id="DB08910">
    <property type="generic name" value="Pomalidomide"/>
</dbReference>
<dbReference type="DrugBank" id="DB05968">
    <property type="generic name" value="PR-104"/>
</dbReference>
<dbReference type="DrugBank" id="DB01411">
    <property type="generic name" value="Pranlukast"/>
</dbReference>
<dbReference type="DrugBank" id="DB00852">
    <property type="generic name" value="Pseudoephedrine"/>
</dbReference>
<dbReference type="DrugBank" id="DB05207">
    <property type="generic name" value="SD118"/>
</dbReference>
<dbReference type="DrugBank" id="DB05412">
    <property type="generic name" value="Talmapimod"/>
</dbReference>
<dbReference type="DrugBank" id="DB01041">
    <property type="generic name" value="Thalidomide"/>
</dbReference>
<dbReference type="DrugBank" id="DB04297">
    <property type="generic name" value="Trichostatin A"/>
</dbReference>
<dbReference type="DrugBank" id="DB05470">
    <property type="generic name" value="VX-702"/>
</dbReference>
<dbReference type="DrugBank" id="DB16454">
    <property type="generic name" value="XPro1595"/>
</dbReference>
<dbReference type="DrugBank" id="DB05017">
    <property type="generic name" value="YSIL6"/>
</dbReference>
<dbReference type="DrugCentral" id="P01375"/>
<dbReference type="GlyConnect" id="609">
    <property type="glycosylation" value="3 O-Linked glycans (1 site)"/>
</dbReference>
<dbReference type="GlyCosmos" id="P01375">
    <property type="glycosylation" value="1 site, 5 glycans"/>
</dbReference>
<dbReference type="GlyGen" id="P01375">
    <property type="glycosylation" value="3 sites, 5 O-linked glycans (1 site)"/>
</dbReference>
<dbReference type="iPTMnet" id="P01375"/>
<dbReference type="PhosphoSitePlus" id="P01375"/>
<dbReference type="SwissPalm" id="P01375"/>
<dbReference type="BioMuta" id="TNF"/>
<dbReference type="DMDM" id="135934"/>
<dbReference type="jPOST" id="P01375"/>
<dbReference type="MassIVE" id="P01375"/>
<dbReference type="PaxDb" id="9606-ENSP00000398698"/>
<dbReference type="PeptideAtlas" id="P01375"/>
<dbReference type="ProteomicsDB" id="51379"/>
<dbReference type="ABCD" id="P01375">
    <property type="antibodies" value="207 sequenced antibodies"/>
</dbReference>
<dbReference type="Antibodypedia" id="27196">
    <property type="antibodies" value="5333 antibodies from 58 providers"/>
</dbReference>
<dbReference type="DNASU" id="7124"/>
<dbReference type="Ensembl" id="ENST00000376122.3">
    <property type="protein sequence ID" value="ENSP00000365290.3"/>
    <property type="gene ID" value="ENSG00000204490.3"/>
</dbReference>
<dbReference type="Ensembl" id="ENST00000383496.4">
    <property type="protein sequence ID" value="ENSP00000372988.4"/>
    <property type="gene ID" value="ENSG00000206439.5"/>
</dbReference>
<dbReference type="Ensembl" id="ENST00000412275.2">
    <property type="protein sequence ID" value="ENSP00000392858.2"/>
    <property type="gene ID" value="ENSG00000228321.3"/>
</dbReference>
<dbReference type="Ensembl" id="ENST00000420425.2">
    <property type="protein sequence ID" value="ENSP00000410668.2"/>
    <property type="gene ID" value="ENSG00000228849.3"/>
</dbReference>
<dbReference type="Ensembl" id="ENST00000443707.2">
    <property type="protein sequence ID" value="ENSP00000389492.2"/>
    <property type="gene ID" value="ENSG00000230108.3"/>
</dbReference>
<dbReference type="Ensembl" id="ENST00000448781.2">
    <property type="protein sequence ID" value="ENSP00000389490.2"/>
    <property type="gene ID" value="ENSG00000223952.3"/>
</dbReference>
<dbReference type="Ensembl" id="ENST00000449264.3">
    <property type="protein sequence ID" value="ENSP00000398698.2"/>
    <property type="gene ID" value="ENSG00000232810.5"/>
</dbReference>
<dbReference type="GeneID" id="7124"/>
<dbReference type="KEGG" id="hsa:7124"/>
<dbReference type="MANE-Select" id="ENST00000449264.3">
    <property type="protein sequence ID" value="ENSP00000398698.2"/>
    <property type="RefSeq nucleotide sequence ID" value="NM_000594.4"/>
    <property type="RefSeq protein sequence ID" value="NP_000585.2"/>
</dbReference>
<dbReference type="AGR" id="HGNC:11892"/>
<dbReference type="CTD" id="7124"/>
<dbReference type="DisGeNET" id="7124"/>
<dbReference type="GeneCards" id="TNF"/>
<dbReference type="HGNC" id="HGNC:11892">
    <property type="gene designation" value="TNF"/>
</dbReference>
<dbReference type="HPA" id="ENSG00000232810">
    <property type="expression patterns" value="Tissue enhanced (bone marrow, lymphoid tissue)"/>
</dbReference>
<dbReference type="MalaCards" id="TNF"/>
<dbReference type="MIM" id="191160">
    <property type="type" value="gene"/>
</dbReference>
<dbReference type="MIM" id="607507">
    <property type="type" value="phenotype"/>
</dbReference>
<dbReference type="MIM" id="610424">
    <property type="type" value="phenotype"/>
</dbReference>
<dbReference type="MIM" id="611162">
    <property type="type" value="phenotype"/>
</dbReference>
<dbReference type="MIM" id="620977">
    <property type="type" value="phenotype"/>
</dbReference>
<dbReference type="neXtProt" id="NX_P01375"/>
<dbReference type="OpenTargets" id="ENSG00000232810"/>
<dbReference type="PharmGKB" id="PA435"/>
<dbReference type="VEuPathDB" id="HostDB:ENSG00000232810"/>
<dbReference type="eggNOG" id="ENOG502S4K8">
    <property type="taxonomic scope" value="Eukaryota"/>
</dbReference>
<dbReference type="GeneTree" id="ENSGT01060000248544"/>
<dbReference type="HOGENOM" id="CLU_070352_3_1_1"/>
<dbReference type="InParanoid" id="P01375"/>
<dbReference type="OMA" id="GATMLFC"/>
<dbReference type="OrthoDB" id="9940698at2759"/>
<dbReference type="PAN-GO" id="P01375">
    <property type="GO annotations" value="10 GO annotations based on evolutionary models"/>
</dbReference>
<dbReference type="PhylomeDB" id="P01375"/>
<dbReference type="TreeFam" id="TF332169"/>
<dbReference type="PathwayCommons" id="P01375"/>
<dbReference type="Reactome" id="R-HSA-381340">
    <property type="pathway name" value="Transcriptional regulation of white adipocyte differentiation"/>
</dbReference>
<dbReference type="Reactome" id="R-HSA-5357786">
    <property type="pathway name" value="TNFR1-induced proapoptotic signaling"/>
</dbReference>
<dbReference type="Reactome" id="R-HSA-5357905">
    <property type="pathway name" value="Regulation of TNFR1 signaling"/>
</dbReference>
<dbReference type="Reactome" id="R-HSA-5357956">
    <property type="pathway name" value="TNFR1-induced NF-kappa-B signaling pathway"/>
</dbReference>
<dbReference type="Reactome" id="R-HSA-5626978">
    <property type="pathway name" value="TNFR1-mediated ceramide production"/>
</dbReference>
<dbReference type="Reactome" id="R-HSA-5668541">
    <property type="pathway name" value="TNFR2 non-canonical NF-kB pathway"/>
</dbReference>
<dbReference type="Reactome" id="R-HSA-6783783">
    <property type="pathway name" value="Interleukin-10 signaling"/>
</dbReference>
<dbReference type="Reactome" id="R-HSA-6785807">
    <property type="pathway name" value="Interleukin-4 and Interleukin-13 signaling"/>
</dbReference>
<dbReference type="Reactome" id="R-HSA-75893">
    <property type="pathway name" value="TNF signaling"/>
</dbReference>
<dbReference type="SignaLink" id="P01375"/>
<dbReference type="SIGNOR" id="P01375"/>
<dbReference type="BioGRID-ORCS" id="7124">
    <property type="hits" value="11 hits in 1165 CRISPR screens"/>
</dbReference>
<dbReference type="ChiTaRS" id="TNF">
    <property type="organism name" value="human"/>
</dbReference>
<dbReference type="EvolutionaryTrace" id="P01375"/>
<dbReference type="GeneWiki" id="Tumor_necrosis_factor-alpha"/>
<dbReference type="GenomeRNAi" id="7124"/>
<dbReference type="Pharos" id="P01375">
    <property type="development level" value="Tclin"/>
</dbReference>
<dbReference type="PRO" id="PR:P01375"/>
<dbReference type="Proteomes" id="UP000005640">
    <property type="component" value="Chromosome 6"/>
</dbReference>
<dbReference type="RNAct" id="P01375">
    <property type="molecule type" value="protein"/>
</dbReference>
<dbReference type="Bgee" id="ENSG00000232810">
    <property type="expression patterns" value="Expressed in granulocyte and 90 other cell types or tissues"/>
</dbReference>
<dbReference type="ExpressionAtlas" id="P01375">
    <property type="expression patterns" value="baseline and differential"/>
</dbReference>
<dbReference type="GO" id="GO:0009986">
    <property type="term" value="C:cell surface"/>
    <property type="evidence" value="ECO:0000314"/>
    <property type="project" value="BHF-UCL"/>
</dbReference>
<dbReference type="GO" id="GO:0009897">
    <property type="term" value="C:external side of plasma membrane"/>
    <property type="evidence" value="ECO:0000250"/>
    <property type="project" value="BHF-UCL"/>
</dbReference>
<dbReference type="GO" id="GO:0005576">
    <property type="term" value="C:extracellular region"/>
    <property type="evidence" value="ECO:0000304"/>
    <property type="project" value="Reactome"/>
</dbReference>
<dbReference type="GO" id="GO:0005615">
    <property type="term" value="C:extracellular space"/>
    <property type="evidence" value="ECO:0000314"/>
    <property type="project" value="BHF-UCL"/>
</dbReference>
<dbReference type="GO" id="GO:0045121">
    <property type="term" value="C:membrane raft"/>
    <property type="evidence" value="ECO:0000314"/>
    <property type="project" value="BHF-UCL"/>
</dbReference>
<dbReference type="GO" id="GO:0043025">
    <property type="term" value="C:neuronal cell body"/>
    <property type="evidence" value="ECO:0007669"/>
    <property type="project" value="Ensembl"/>
</dbReference>
<dbReference type="GO" id="GO:0001891">
    <property type="term" value="C:phagocytic cup"/>
    <property type="evidence" value="ECO:0000250"/>
    <property type="project" value="BHF-UCL"/>
</dbReference>
<dbReference type="GO" id="GO:0005886">
    <property type="term" value="C:plasma membrane"/>
    <property type="evidence" value="ECO:0000314"/>
    <property type="project" value="BHF-UCL"/>
</dbReference>
<dbReference type="GO" id="GO:0055037">
    <property type="term" value="C:recycling endosome"/>
    <property type="evidence" value="ECO:0000250"/>
    <property type="project" value="BHF-UCL"/>
</dbReference>
<dbReference type="GO" id="GO:0005125">
    <property type="term" value="F:cytokine activity"/>
    <property type="evidence" value="ECO:0000314"/>
    <property type="project" value="BHF-UCL"/>
</dbReference>
<dbReference type="GO" id="GO:0038177">
    <property type="term" value="F:death receptor agonist activity"/>
    <property type="evidence" value="ECO:0000314"/>
    <property type="project" value="UniProt"/>
</dbReference>
<dbReference type="GO" id="GO:0042802">
    <property type="term" value="F:identical protein binding"/>
    <property type="evidence" value="ECO:0000314"/>
    <property type="project" value="BHF-UCL"/>
</dbReference>
<dbReference type="GO" id="GO:0002020">
    <property type="term" value="F:protease binding"/>
    <property type="evidence" value="ECO:0000353"/>
    <property type="project" value="BHF-UCL"/>
</dbReference>
<dbReference type="GO" id="GO:0048018">
    <property type="term" value="F:receptor ligand activity"/>
    <property type="evidence" value="ECO:0000250"/>
    <property type="project" value="UniProt"/>
</dbReference>
<dbReference type="GO" id="GO:0000976">
    <property type="term" value="F:transcription cis-regulatory region binding"/>
    <property type="evidence" value="ECO:0000314"/>
    <property type="project" value="UniProtKB"/>
</dbReference>
<dbReference type="GO" id="GO:0005164">
    <property type="term" value="F:tumor necrosis factor receptor binding"/>
    <property type="evidence" value="ECO:0000314"/>
    <property type="project" value="BHF-UCL"/>
</dbReference>
<dbReference type="GO" id="GO:0140374">
    <property type="term" value="P:antiviral innate immune response"/>
    <property type="evidence" value="ECO:0000314"/>
    <property type="project" value="UniProt"/>
</dbReference>
<dbReference type="GO" id="GO:0048143">
    <property type="term" value="P:astrocyte activation"/>
    <property type="evidence" value="ECO:0000303"/>
    <property type="project" value="ARUK-UCL"/>
</dbReference>
<dbReference type="GO" id="GO:0019722">
    <property type="term" value="P:calcium-mediated signaling"/>
    <property type="evidence" value="ECO:0007669"/>
    <property type="project" value="Ensembl"/>
</dbReference>
<dbReference type="GO" id="GO:0007259">
    <property type="term" value="P:cell surface receptor signaling pathway via JAK-STAT"/>
    <property type="evidence" value="ECO:0000250"/>
    <property type="project" value="ARUK-UCL"/>
</dbReference>
<dbReference type="GO" id="GO:0071230">
    <property type="term" value="P:cellular response to amino acid stimulus"/>
    <property type="evidence" value="ECO:0007669"/>
    <property type="project" value="Ensembl"/>
</dbReference>
<dbReference type="GO" id="GO:1904646">
    <property type="term" value="P:cellular response to amyloid-beta"/>
    <property type="evidence" value="ECO:0007669"/>
    <property type="project" value="Ensembl"/>
</dbReference>
<dbReference type="GO" id="GO:0071479">
    <property type="term" value="P:cellular response to ionizing radiation"/>
    <property type="evidence" value="ECO:0000314"/>
    <property type="project" value="BHF-UCL"/>
</dbReference>
<dbReference type="GO" id="GO:0071222">
    <property type="term" value="P:cellular response to lipopolysaccharide"/>
    <property type="evidence" value="ECO:0007669"/>
    <property type="project" value="Ensembl"/>
</dbReference>
<dbReference type="GO" id="GO:0071316">
    <property type="term" value="P:cellular response to nicotine"/>
    <property type="evidence" value="ECO:0000314"/>
    <property type="project" value="UniProtKB"/>
</dbReference>
<dbReference type="GO" id="GO:0071300">
    <property type="term" value="P:cellular response to retinoic acid"/>
    <property type="evidence" value="ECO:0007669"/>
    <property type="project" value="Ensembl"/>
</dbReference>
<dbReference type="GO" id="GO:0097237">
    <property type="term" value="P:cellular response to toxic substance"/>
    <property type="evidence" value="ECO:0007669"/>
    <property type="project" value="Ensembl"/>
</dbReference>
<dbReference type="GO" id="GO:0071346">
    <property type="term" value="P:cellular response to type II interferon"/>
    <property type="evidence" value="ECO:0007669"/>
    <property type="project" value="Ensembl"/>
</dbReference>
<dbReference type="GO" id="GO:0002439">
    <property type="term" value="P:chronic inflammatory response to antigenic stimulus"/>
    <property type="evidence" value="ECO:0000315"/>
    <property type="project" value="BHF-UCL"/>
</dbReference>
<dbReference type="GO" id="GO:0007623">
    <property type="term" value="P:circadian rhythm"/>
    <property type="evidence" value="ECO:0007669"/>
    <property type="project" value="Ensembl"/>
</dbReference>
<dbReference type="GO" id="GO:0050890">
    <property type="term" value="P:cognition"/>
    <property type="evidence" value="ECO:0000304"/>
    <property type="project" value="ARUK-UCL"/>
</dbReference>
<dbReference type="GO" id="GO:0050830">
    <property type="term" value="P:defense response to Gram-positive bacterium"/>
    <property type="evidence" value="ECO:0007669"/>
    <property type="project" value="Ensembl"/>
</dbReference>
<dbReference type="GO" id="GO:0050966">
    <property type="term" value="P:detection of mechanical stimulus involved in sensory perception of pain"/>
    <property type="evidence" value="ECO:0007669"/>
    <property type="project" value="Ensembl"/>
</dbReference>
<dbReference type="GO" id="GO:0048566">
    <property type="term" value="P:embryonic digestive tract development"/>
    <property type="evidence" value="ECO:0000270"/>
    <property type="project" value="DFLAT"/>
</dbReference>
<dbReference type="GO" id="GO:0072577">
    <property type="term" value="P:endothelial cell apoptotic process"/>
    <property type="evidence" value="ECO:0007669"/>
    <property type="project" value="Ensembl"/>
</dbReference>
<dbReference type="GO" id="GO:0060664">
    <property type="term" value="P:epithelial cell proliferation involved in salivary gland morphogenesis"/>
    <property type="evidence" value="ECO:0007669"/>
    <property type="project" value="Ensembl"/>
</dbReference>
<dbReference type="GO" id="GO:0030198">
    <property type="term" value="P:extracellular matrix organization"/>
    <property type="evidence" value="ECO:0007669"/>
    <property type="project" value="Ensembl"/>
</dbReference>
<dbReference type="GO" id="GO:0097191">
    <property type="term" value="P:extrinsic apoptotic signaling pathway"/>
    <property type="evidence" value="ECO:0000314"/>
    <property type="project" value="UniProtKB"/>
</dbReference>
<dbReference type="GO" id="GO:0008625">
    <property type="term" value="P:extrinsic apoptotic signaling pathway via death domain receptors"/>
    <property type="evidence" value="ECO:0000314"/>
    <property type="project" value="UniProtKB"/>
</dbReference>
<dbReference type="GO" id="GO:0006006">
    <property type="term" value="P:glucose metabolic process"/>
    <property type="evidence" value="ECO:0007669"/>
    <property type="project" value="Ensembl"/>
</dbReference>
<dbReference type="GO" id="GO:0006959">
    <property type="term" value="P:humoral immune response"/>
    <property type="evidence" value="ECO:0007669"/>
    <property type="project" value="Ensembl"/>
</dbReference>
<dbReference type="GO" id="GO:0006955">
    <property type="term" value="P:immune response"/>
    <property type="evidence" value="ECO:0000318"/>
    <property type="project" value="GO_Central"/>
</dbReference>
<dbReference type="GO" id="GO:0006954">
    <property type="term" value="P:inflammatory response"/>
    <property type="evidence" value="ECO:0000314"/>
    <property type="project" value="BHF-UCL"/>
</dbReference>
<dbReference type="GO" id="GO:0090594">
    <property type="term" value="P:inflammatory response to wounding"/>
    <property type="evidence" value="ECO:0000314"/>
    <property type="project" value="UniProt"/>
</dbReference>
<dbReference type="GO" id="GO:0008630">
    <property type="term" value="P:intrinsic apoptotic signaling pathway in response to DNA damage"/>
    <property type="evidence" value="ECO:0007669"/>
    <property type="project" value="Ensembl"/>
</dbReference>
<dbReference type="GO" id="GO:0007254">
    <property type="term" value="P:JNK cascade"/>
    <property type="evidence" value="ECO:0007669"/>
    <property type="project" value="Ensembl"/>
</dbReference>
<dbReference type="GO" id="GO:0002523">
    <property type="term" value="P:leukocyte migration involved in inflammatory response"/>
    <property type="evidence" value="ECO:0007669"/>
    <property type="project" value="Ensembl"/>
</dbReference>
<dbReference type="GO" id="GO:0050901">
    <property type="term" value="P:leukocyte tethering or rolling"/>
    <property type="evidence" value="ECO:0000314"/>
    <property type="project" value="BHF-UCL"/>
</dbReference>
<dbReference type="GO" id="GO:0097421">
    <property type="term" value="P:liver regeneration"/>
    <property type="evidence" value="ECO:0007669"/>
    <property type="project" value="Ensembl"/>
</dbReference>
<dbReference type="GO" id="GO:0002281">
    <property type="term" value="P:macrophage activation involved in immune response"/>
    <property type="evidence" value="ECO:0007669"/>
    <property type="project" value="Ensembl"/>
</dbReference>
<dbReference type="GO" id="GO:0001774">
    <property type="term" value="P:microglial cell activation"/>
    <property type="evidence" value="ECO:0000250"/>
    <property type="project" value="ARUK-UCL"/>
</dbReference>
<dbReference type="GO" id="GO:0097527">
    <property type="term" value="P:necroptotic signaling pathway"/>
    <property type="evidence" value="ECO:0000314"/>
    <property type="project" value="UniProtKB"/>
</dbReference>
<dbReference type="GO" id="GO:1900222">
    <property type="term" value="P:negative regulation of amyloid-beta clearance"/>
    <property type="evidence" value="ECO:0000250"/>
    <property type="project" value="ARUK-UCL"/>
</dbReference>
<dbReference type="GO" id="GO:2001234">
    <property type="term" value="P:negative regulation of apoptotic signaling pathway"/>
    <property type="evidence" value="ECO:0000316"/>
    <property type="project" value="ARUK-UCL"/>
</dbReference>
<dbReference type="GO" id="GO:1903347">
    <property type="term" value="P:negative regulation of bicellular tight junction assembly"/>
    <property type="evidence" value="ECO:0000314"/>
    <property type="project" value="UniProtKB"/>
</dbReference>
<dbReference type="GO" id="GO:0120190">
    <property type="term" value="P:negative regulation of bile acid secretion"/>
    <property type="evidence" value="ECO:0007669"/>
    <property type="project" value="Ensembl"/>
</dbReference>
<dbReference type="GO" id="GO:0043537">
    <property type="term" value="P:negative regulation of blood vessel endothelial cell migration"/>
    <property type="evidence" value="ECO:0000314"/>
    <property type="project" value="BHF-UCL"/>
</dbReference>
<dbReference type="GO" id="GO:0061048">
    <property type="term" value="P:negative regulation of branching involved in lung morphogenesis"/>
    <property type="evidence" value="ECO:0000314"/>
    <property type="project" value="UniProtKB"/>
</dbReference>
<dbReference type="GO" id="GO:0002719">
    <property type="term" value="P:negative regulation of cytokine production involved in immune response"/>
    <property type="evidence" value="ECO:0000314"/>
    <property type="project" value="BHF-UCL"/>
</dbReference>
<dbReference type="GO" id="GO:0046325">
    <property type="term" value="P:negative regulation of D-glucose import"/>
    <property type="evidence" value="ECO:0007669"/>
    <property type="project" value="Ensembl"/>
</dbReference>
<dbReference type="GO" id="GO:0045892">
    <property type="term" value="P:negative regulation of DNA-templated transcription"/>
    <property type="evidence" value="ECO:0000314"/>
    <property type="project" value="UniProtKB"/>
</dbReference>
<dbReference type="GO" id="GO:0001937">
    <property type="term" value="P:negative regulation of endothelial cell proliferation"/>
    <property type="evidence" value="ECO:0007669"/>
    <property type="project" value="Ensembl"/>
</dbReference>
<dbReference type="GO" id="GO:2001240">
    <property type="term" value="P:negative regulation of extrinsic apoptotic signaling pathway in absence of ligand"/>
    <property type="evidence" value="ECO:0000314"/>
    <property type="project" value="BHF-UCL"/>
</dbReference>
<dbReference type="GO" id="GO:0045599">
    <property type="term" value="P:negative regulation of fat cell differentiation"/>
    <property type="evidence" value="ECO:0000303"/>
    <property type="project" value="BHF-UCL"/>
</dbReference>
<dbReference type="GO" id="GO:0010629">
    <property type="term" value="P:negative regulation of gene expression"/>
    <property type="evidence" value="ECO:0000314"/>
    <property type="project" value="UniProtKB"/>
</dbReference>
<dbReference type="GO" id="GO:0010459">
    <property type="term" value="P:negative regulation of heart rate"/>
    <property type="evidence" value="ECO:0007669"/>
    <property type="project" value="Ensembl"/>
</dbReference>
<dbReference type="GO" id="GO:0032715">
    <property type="term" value="P:negative regulation of interleukin-6 production"/>
    <property type="evidence" value="ECO:0000314"/>
    <property type="project" value="BHF-UCL"/>
</dbReference>
<dbReference type="GO" id="GO:0002037">
    <property type="term" value="P:negative regulation of L-glutamate import across plasma membrane"/>
    <property type="evidence" value="ECO:0007669"/>
    <property type="project" value="Ensembl"/>
</dbReference>
<dbReference type="GO" id="GO:0050995">
    <property type="term" value="P:negative regulation of lipid catabolic process"/>
    <property type="evidence" value="ECO:0000314"/>
    <property type="project" value="BHF-UCL"/>
</dbReference>
<dbReference type="GO" id="GO:0010888">
    <property type="term" value="P:negative regulation of lipid storage"/>
    <property type="evidence" value="ECO:0000303"/>
    <property type="project" value="BHF-UCL"/>
</dbReference>
<dbReference type="GO" id="GO:1902894">
    <property type="term" value="P:negative regulation of miRNA transcription"/>
    <property type="evidence" value="ECO:0000303"/>
    <property type="project" value="BHF-UCL"/>
</dbReference>
<dbReference type="GO" id="GO:0045930">
    <property type="term" value="P:negative regulation of mitotic cell cycle"/>
    <property type="evidence" value="ECO:0007669"/>
    <property type="project" value="Ensembl"/>
</dbReference>
<dbReference type="GO" id="GO:0031642">
    <property type="term" value="P:negative regulation of myelination"/>
    <property type="evidence" value="ECO:0007669"/>
    <property type="project" value="Ensembl"/>
</dbReference>
<dbReference type="GO" id="GO:0045662">
    <property type="term" value="P:negative regulation of myoblast differentiation"/>
    <property type="evidence" value="ECO:0007669"/>
    <property type="project" value="Ensembl"/>
</dbReference>
<dbReference type="GO" id="GO:0050768">
    <property type="term" value="P:negative regulation of neurogenesis"/>
    <property type="evidence" value="ECO:0000304"/>
    <property type="project" value="ARUK-UCL"/>
</dbReference>
<dbReference type="GO" id="GO:0045668">
    <property type="term" value="P:negative regulation of osteoblast differentiation"/>
    <property type="evidence" value="ECO:0007669"/>
    <property type="project" value="Ensembl"/>
</dbReference>
<dbReference type="GO" id="GO:0090324">
    <property type="term" value="P:negative regulation of oxidative phosphorylation"/>
    <property type="evidence" value="ECO:0007669"/>
    <property type="project" value="Ensembl"/>
</dbReference>
<dbReference type="GO" id="GO:0043242">
    <property type="term" value="P:negative regulation of protein-containing complex disassembly"/>
    <property type="evidence" value="ECO:0000314"/>
    <property type="project" value="UniProtKB"/>
</dbReference>
<dbReference type="GO" id="GO:0003085">
    <property type="term" value="P:negative regulation of systemic arterial blood pressure"/>
    <property type="evidence" value="ECO:0007669"/>
    <property type="project" value="Ensembl"/>
</dbReference>
<dbReference type="GO" id="GO:0000122">
    <property type="term" value="P:negative regulation of transcription by RNA polymerase II"/>
    <property type="evidence" value="ECO:0000314"/>
    <property type="project" value="UniProtKB"/>
</dbReference>
<dbReference type="GO" id="GO:0061044">
    <property type="term" value="P:negative regulation of vascular wound healing"/>
    <property type="evidence" value="ECO:0000314"/>
    <property type="project" value="BHF-UCL"/>
</dbReference>
<dbReference type="GO" id="GO:0045071">
    <property type="term" value="P:negative regulation of viral genome replication"/>
    <property type="evidence" value="ECO:0000314"/>
    <property type="project" value="BHF-UCL"/>
</dbReference>
<dbReference type="GO" id="GO:0030316">
    <property type="term" value="P:osteoclast differentiation"/>
    <property type="evidence" value="ECO:0007669"/>
    <property type="project" value="Ensembl"/>
</dbReference>
<dbReference type="GO" id="GO:0043491">
    <property type="term" value="P:phosphatidylinositol 3-kinase/protein kinase B signal transduction"/>
    <property type="evidence" value="ECO:0007669"/>
    <property type="project" value="Ensembl"/>
</dbReference>
<dbReference type="GO" id="GO:0045760">
    <property type="term" value="P:positive regulation of action potential"/>
    <property type="evidence" value="ECO:0007669"/>
    <property type="project" value="Ensembl"/>
</dbReference>
<dbReference type="GO" id="GO:1902004">
    <property type="term" value="P:positive regulation of amyloid-beta formation"/>
    <property type="evidence" value="ECO:0000250"/>
    <property type="project" value="ARUK-UCL"/>
</dbReference>
<dbReference type="GO" id="GO:0043065">
    <property type="term" value="P:positive regulation of apoptotic process"/>
    <property type="evidence" value="ECO:0000314"/>
    <property type="project" value="UniProtKB"/>
</dbReference>
<dbReference type="GO" id="GO:2000334">
    <property type="term" value="P:positive regulation of blood microparticle formation"/>
    <property type="evidence" value="ECO:0000314"/>
    <property type="project" value="BHF-UCL"/>
</dbReference>
<dbReference type="GO" id="GO:0070886">
    <property type="term" value="P:positive regulation of calcineurin-NFAT signaling cascade"/>
    <property type="evidence" value="ECO:0000314"/>
    <property type="project" value="MGI"/>
</dbReference>
<dbReference type="GO" id="GO:0043123">
    <property type="term" value="P:positive regulation of canonical NF-kappaB signal transduction"/>
    <property type="evidence" value="ECO:0000314"/>
    <property type="project" value="AgBase"/>
</dbReference>
<dbReference type="GO" id="GO:0045785">
    <property type="term" value="P:positive regulation of cell adhesion"/>
    <property type="evidence" value="ECO:0000315"/>
    <property type="project" value="UniProtKB"/>
</dbReference>
<dbReference type="GO" id="GO:2000343">
    <property type="term" value="P:positive regulation of chemokine (C-X-C motif) ligand 2 production"/>
    <property type="evidence" value="ECO:0000314"/>
    <property type="project" value="BHF-UCL"/>
</dbReference>
<dbReference type="GO" id="GO:0032722">
    <property type="term" value="P:positive regulation of chemokine production"/>
    <property type="evidence" value="ECO:0000314"/>
    <property type="project" value="BHF-UCL"/>
</dbReference>
<dbReference type="GO" id="GO:0002876">
    <property type="term" value="P:positive regulation of chronic inflammatory response to antigenic stimulus"/>
    <property type="evidence" value="ECO:0007669"/>
    <property type="project" value="Ensembl"/>
</dbReference>
<dbReference type="GO" id="GO:0001819">
    <property type="term" value="P:positive regulation of cytokine production"/>
    <property type="evidence" value="ECO:0000314"/>
    <property type="project" value="BHF-UCL"/>
</dbReference>
<dbReference type="GO" id="GO:1900017">
    <property type="term" value="P:positive regulation of cytokine production involved in inflammatory response"/>
    <property type="evidence" value="ECO:0000314"/>
    <property type="project" value="ARUK-UCL"/>
</dbReference>
<dbReference type="GO" id="GO:2000573">
    <property type="term" value="P:positive regulation of DNA biosynthetic process"/>
    <property type="evidence" value="ECO:0007669"/>
    <property type="project" value="Ensembl"/>
</dbReference>
<dbReference type="GO" id="GO:0045893">
    <property type="term" value="P:positive regulation of DNA-templated transcription"/>
    <property type="evidence" value="ECO:0000314"/>
    <property type="project" value="UniProtKB"/>
</dbReference>
<dbReference type="GO" id="GO:0070374">
    <property type="term" value="P:positive regulation of ERK1 and ERK2 cascade"/>
    <property type="evidence" value="ECO:0000303"/>
    <property type="project" value="BHF-UCL"/>
</dbReference>
<dbReference type="GO" id="GO:2001238">
    <property type="term" value="P:positive regulation of extrinsic apoptotic signaling pathway"/>
    <property type="evidence" value="ECO:0000318"/>
    <property type="project" value="GO_Central"/>
</dbReference>
<dbReference type="GO" id="GO:0031622">
    <property type="term" value="P:positive regulation of fever generation"/>
    <property type="evidence" value="ECO:0000250"/>
    <property type="project" value="BHF-UCL"/>
</dbReference>
<dbReference type="GO" id="GO:0032724">
    <property type="term" value="P:positive regulation of fractalkine production"/>
    <property type="evidence" value="ECO:0000250"/>
    <property type="project" value="ARUK-UCL"/>
</dbReference>
<dbReference type="GO" id="GO:0010628">
    <property type="term" value="P:positive regulation of gene expression"/>
    <property type="evidence" value="ECO:0000314"/>
    <property type="project" value="UniProtKB"/>
</dbReference>
<dbReference type="GO" id="GO:0060252">
    <property type="term" value="P:positive regulation of glial cell proliferation"/>
    <property type="evidence" value="ECO:0000314"/>
    <property type="project" value="ARUK-UCL"/>
</dbReference>
<dbReference type="GO" id="GO:0051798">
    <property type="term" value="P:positive regulation of hair follicle development"/>
    <property type="evidence" value="ECO:0007669"/>
    <property type="project" value="Ensembl"/>
</dbReference>
<dbReference type="GO" id="GO:2000347">
    <property type="term" value="P:positive regulation of hepatocyte proliferation"/>
    <property type="evidence" value="ECO:0007669"/>
    <property type="project" value="Ensembl"/>
</dbReference>
<dbReference type="GO" id="GO:0034116">
    <property type="term" value="P:positive regulation of heterotypic cell-cell adhesion"/>
    <property type="evidence" value="ECO:0000314"/>
    <property type="project" value="BHF-UCL"/>
</dbReference>
<dbReference type="GO" id="GO:0002925">
    <property type="term" value="P:positive regulation of humoral immune response mediated by circulating immunoglobulin"/>
    <property type="evidence" value="ECO:0007669"/>
    <property type="project" value="Ensembl"/>
</dbReference>
<dbReference type="GO" id="GO:0050729">
    <property type="term" value="P:positive regulation of inflammatory response"/>
    <property type="evidence" value="ECO:0000304"/>
    <property type="project" value="ARUK-UCL"/>
</dbReference>
<dbReference type="GO" id="GO:0032731">
    <property type="term" value="P:positive regulation of interleukin-1 beta production"/>
    <property type="evidence" value="ECO:0000314"/>
    <property type="project" value="ARUK-UCL"/>
</dbReference>
<dbReference type="GO" id="GO:0032741">
    <property type="term" value="P:positive regulation of interleukin-18 production"/>
    <property type="evidence" value="ECO:0007669"/>
    <property type="project" value="Ensembl"/>
</dbReference>
<dbReference type="GO" id="GO:0150129">
    <property type="term" value="P:positive regulation of interleukin-33 production"/>
    <property type="evidence" value="ECO:0000314"/>
    <property type="project" value="ARUK-UCL"/>
</dbReference>
<dbReference type="GO" id="GO:0032755">
    <property type="term" value="P:positive regulation of interleukin-6 production"/>
    <property type="evidence" value="ECO:0000314"/>
    <property type="project" value="ARUK-UCL"/>
</dbReference>
<dbReference type="GO" id="GO:0032757">
    <property type="term" value="P:positive regulation of interleukin-8 production"/>
    <property type="evidence" value="ECO:0000314"/>
    <property type="project" value="BHF-UCL"/>
</dbReference>
<dbReference type="GO" id="GO:0046330">
    <property type="term" value="P:positive regulation of JNK cascade"/>
    <property type="evidence" value="ECO:0000314"/>
    <property type="project" value="BHF-UCL"/>
</dbReference>
<dbReference type="GO" id="GO:0043507">
    <property type="term" value="P:positive regulation of JUN kinase activity"/>
    <property type="evidence" value="ECO:0000314"/>
    <property type="project" value="UniProtKB"/>
</dbReference>
<dbReference type="GO" id="GO:1904999">
    <property type="term" value="P:positive regulation of leukocyte adhesion to arterial endothelial cell"/>
    <property type="evidence" value="ECO:0000314"/>
    <property type="project" value="BHF-UCL"/>
</dbReference>
<dbReference type="GO" id="GO:1904996">
    <property type="term" value="P:positive regulation of leukocyte adhesion to vascular endothelial cell"/>
    <property type="evidence" value="ECO:0000314"/>
    <property type="project" value="BHF-UCL"/>
</dbReference>
<dbReference type="GO" id="GO:0010744">
    <property type="term" value="P:positive regulation of macrophage derived foam cell differentiation"/>
    <property type="evidence" value="ECO:0000314"/>
    <property type="project" value="BHF-UCL"/>
</dbReference>
<dbReference type="GO" id="GO:0043406">
    <property type="term" value="P:positive regulation of MAP kinase activity"/>
    <property type="evidence" value="ECO:0000314"/>
    <property type="project" value="UniProtKB"/>
</dbReference>
<dbReference type="GO" id="GO:0043410">
    <property type="term" value="P:positive regulation of MAPK cascade"/>
    <property type="evidence" value="ECO:0000314"/>
    <property type="project" value="BHF-UCL"/>
</dbReference>
<dbReference type="GO" id="GO:0051044">
    <property type="term" value="P:positive regulation of membrane protein ectodomain proteolysis"/>
    <property type="evidence" value="ECO:0000314"/>
    <property type="project" value="BHF-UCL"/>
</dbReference>
<dbReference type="GO" id="GO:1902895">
    <property type="term" value="P:positive regulation of miRNA transcription"/>
    <property type="evidence" value="ECO:0000314"/>
    <property type="project" value="BHF-UCL"/>
</dbReference>
<dbReference type="GO" id="GO:0045840">
    <property type="term" value="P:positive regulation of mitotic nuclear division"/>
    <property type="evidence" value="ECO:0007669"/>
    <property type="project" value="Ensembl"/>
</dbReference>
<dbReference type="GO" id="GO:0071677">
    <property type="term" value="P:positive regulation of mononuclear cell migration"/>
    <property type="evidence" value="ECO:0000303"/>
    <property type="project" value="BHF-UCL"/>
</dbReference>
<dbReference type="GO" id="GO:0150078">
    <property type="term" value="P:positive regulation of neuroinflammatory response"/>
    <property type="evidence" value="ECO:0000304"/>
    <property type="project" value="ARUK-UCL"/>
</dbReference>
<dbReference type="GO" id="GO:0043525">
    <property type="term" value="P:positive regulation of neuron apoptotic process"/>
    <property type="evidence" value="ECO:0000250"/>
    <property type="project" value="ARUK-UCL"/>
</dbReference>
<dbReference type="GO" id="GO:1902565">
    <property type="term" value="P:positive regulation of neutrophil activation"/>
    <property type="evidence" value="ECO:0007669"/>
    <property type="project" value="Ensembl"/>
</dbReference>
<dbReference type="GO" id="GO:0051092">
    <property type="term" value="P:positive regulation of NF-kappaB transcription factor activity"/>
    <property type="evidence" value="ECO:0000314"/>
    <property type="project" value="UniProtKB"/>
</dbReference>
<dbReference type="GO" id="GO:0045429">
    <property type="term" value="P:positive regulation of nitric oxide biosynthetic process"/>
    <property type="evidence" value="ECO:0000314"/>
    <property type="project" value="BHF-UCL"/>
</dbReference>
<dbReference type="GO" id="GO:1901224">
    <property type="term" value="P:positive regulation of non-canonical NF-kappaB signal transduction"/>
    <property type="evidence" value="ECO:0000314"/>
    <property type="project" value="UniProtKB"/>
</dbReference>
<dbReference type="GO" id="GO:0045672">
    <property type="term" value="P:positive regulation of osteoclast differentiation"/>
    <property type="evidence" value="ECO:0000314"/>
    <property type="project" value="BHF-UCL"/>
</dbReference>
<dbReference type="GO" id="GO:0051897">
    <property type="term" value="P:positive regulation of phosphatidylinositol 3-kinase/protein kinase B signal transduction"/>
    <property type="evidence" value="ECO:0000250"/>
    <property type="project" value="ARUK-UCL"/>
</dbReference>
<dbReference type="GO" id="GO:0071803">
    <property type="term" value="P:positive regulation of podosome assembly"/>
    <property type="evidence" value="ECO:0000314"/>
    <property type="project" value="BHF-UCL"/>
</dbReference>
<dbReference type="GO" id="GO:0043068">
    <property type="term" value="P:positive regulation of programmed cell death"/>
    <property type="evidence" value="ECO:0000314"/>
    <property type="project" value="UniProtKB"/>
</dbReference>
<dbReference type="GO" id="GO:0045732">
    <property type="term" value="P:positive regulation of protein catabolic process"/>
    <property type="evidence" value="ECO:0000314"/>
    <property type="project" value="AgBase"/>
</dbReference>
<dbReference type="GO" id="GO:2000010">
    <property type="term" value="P:positive regulation of protein localization to cell surface"/>
    <property type="evidence" value="ECO:0000314"/>
    <property type="project" value="BHF-UCL"/>
</dbReference>
<dbReference type="GO" id="GO:1903078">
    <property type="term" value="P:positive regulation of protein localization to plasma membrane"/>
    <property type="evidence" value="ECO:0000250"/>
    <property type="project" value="ARUK-UCL"/>
</dbReference>
<dbReference type="GO" id="GO:0001934">
    <property type="term" value="P:positive regulation of protein phosphorylation"/>
    <property type="evidence" value="ECO:0000314"/>
    <property type="project" value="UniProtKB"/>
</dbReference>
<dbReference type="GO" id="GO:0051222">
    <property type="term" value="P:positive regulation of protein transport"/>
    <property type="evidence" value="ECO:0000314"/>
    <property type="project" value="BHF-UCL"/>
</dbReference>
<dbReference type="GO" id="GO:0031334">
    <property type="term" value="P:positive regulation of protein-containing complex assembly"/>
    <property type="evidence" value="ECO:0000314"/>
    <property type="project" value="BHF-UCL"/>
</dbReference>
<dbReference type="GO" id="GO:0043243">
    <property type="term" value="P:positive regulation of protein-containing complex disassembly"/>
    <property type="evidence" value="ECO:0000314"/>
    <property type="project" value="UniProtKB"/>
</dbReference>
<dbReference type="GO" id="GO:0048661">
    <property type="term" value="P:positive regulation of smooth muscle cell proliferation"/>
    <property type="evidence" value="ECO:0000314"/>
    <property type="project" value="BHF-UCL"/>
</dbReference>
<dbReference type="GO" id="GO:0050806">
    <property type="term" value="P:positive regulation of synaptic transmission"/>
    <property type="evidence" value="ECO:0000250"/>
    <property type="project" value="ARUK-UCL"/>
</dbReference>
<dbReference type="GO" id="GO:1901647">
    <property type="term" value="P:positive regulation of synoviocyte proliferation"/>
    <property type="evidence" value="ECO:0000314"/>
    <property type="project" value="ARUK-UCL"/>
</dbReference>
<dbReference type="GO" id="GO:0045944">
    <property type="term" value="P:positive regulation of transcription by RNA polymerase II"/>
    <property type="evidence" value="ECO:0000314"/>
    <property type="project" value="UniProtKB"/>
</dbReference>
<dbReference type="GO" id="GO:0045994">
    <property type="term" value="P:positive regulation of translational initiation by iron"/>
    <property type="evidence" value="ECO:0007669"/>
    <property type="project" value="Ensembl"/>
</dbReference>
<dbReference type="GO" id="GO:0032729">
    <property type="term" value="P:positive regulation of type II interferon production"/>
    <property type="evidence" value="ECO:0007669"/>
    <property type="project" value="Ensembl"/>
</dbReference>
<dbReference type="GO" id="GO:1904707">
    <property type="term" value="P:positive regulation of vascular associated smooth muscle cell proliferation"/>
    <property type="evidence" value="ECO:0007669"/>
    <property type="project" value="Ensembl"/>
</dbReference>
<dbReference type="GO" id="GO:0060557">
    <property type="term" value="P:positive regulation of vitamin D biosynthetic process"/>
    <property type="evidence" value="ECO:0000314"/>
    <property type="project" value="BHF-UCL"/>
</dbReference>
<dbReference type="GO" id="GO:0072659">
    <property type="term" value="P:protein localization to plasma membrane"/>
    <property type="evidence" value="ECO:0000314"/>
    <property type="project" value="UniProtKB"/>
</dbReference>
<dbReference type="GO" id="GO:0060693">
    <property type="term" value="P:regulation of branching involved in salivary gland morphogenesis"/>
    <property type="evidence" value="ECO:0007669"/>
    <property type="project" value="Ensembl"/>
</dbReference>
<dbReference type="GO" id="GO:0043122">
    <property type="term" value="P:regulation of canonical NF-kappaB signal transduction"/>
    <property type="evidence" value="ECO:0000314"/>
    <property type="project" value="BHF-UCL"/>
</dbReference>
<dbReference type="GO" id="GO:2000351">
    <property type="term" value="P:regulation of endothelial cell apoptotic process"/>
    <property type="evidence" value="ECO:0000315"/>
    <property type="project" value="ARUK-UCL"/>
</dbReference>
<dbReference type="GO" id="GO:1903140">
    <property type="term" value="P:regulation of establishment of endothelial barrier"/>
    <property type="evidence" value="ECO:0000314"/>
    <property type="project" value="UniProtKB"/>
</dbReference>
<dbReference type="GO" id="GO:0045598">
    <property type="term" value="P:regulation of fat cell differentiation"/>
    <property type="evidence" value="ECO:0000250"/>
    <property type="project" value="ARUK-UCL"/>
</dbReference>
<dbReference type="GO" id="GO:0002637">
    <property type="term" value="P:regulation of immunoglobulin production"/>
    <property type="evidence" value="ECO:0007669"/>
    <property type="project" value="Ensembl"/>
</dbReference>
<dbReference type="GO" id="GO:0050796">
    <property type="term" value="P:regulation of insulin secretion"/>
    <property type="evidence" value="ECO:0000314"/>
    <property type="project" value="BHF-UCL"/>
</dbReference>
<dbReference type="GO" id="GO:1905038">
    <property type="term" value="P:regulation of membrane lipid metabolic process"/>
    <property type="evidence" value="ECO:0007669"/>
    <property type="project" value="Ensembl"/>
</dbReference>
<dbReference type="GO" id="GO:0019222">
    <property type="term" value="P:regulation of metabolic process"/>
    <property type="evidence" value="ECO:0000250"/>
    <property type="project" value="ARUK-UCL"/>
</dbReference>
<dbReference type="GO" id="GO:2000377">
    <property type="term" value="P:regulation of reactive oxygen species metabolic process"/>
    <property type="evidence" value="ECO:0000314"/>
    <property type="project" value="BHF-UCL"/>
</dbReference>
<dbReference type="GO" id="GO:0050807">
    <property type="term" value="P:regulation of synapse organization"/>
    <property type="evidence" value="ECO:0000250"/>
    <property type="project" value="ARUK-UCL"/>
</dbReference>
<dbReference type="GO" id="GO:0051966">
    <property type="term" value="P:regulation of synaptic transmission, glutamatergic"/>
    <property type="evidence" value="ECO:0000304"/>
    <property type="project" value="ARUK-UCL"/>
</dbReference>
<dbReference type="GO" id="GO:1905242">
    <property type="term" value="P:response to 3,3',5-triiodo-L-thyronine"/>
    <property type="evidence" value="ECO:0007669"/>
    <property type="project" value="Ensembl"/>
</dbReference>
<dbReference type="GO" id="GO:0014823">
    <property type="term" value="P:response to activity"/>
    <property type="evidence" value="ECO:0007669"/>
    <property type="project" value="Ensembl"/>
</dbReference>
<dbReference type="GO" id="GO:0045471">
    <property type="term" value="P:response to ethanol"/>
    <property type="evidence" value="ECO:0007669"/>
    <property type="project" value="Ensembl"/>
</dbReference>
<dbReference type="GO" id="GO:0009750">
    <property type="term" value="P:response to fructose"/>
    <property type="evidence" value="ECO:0007669"/>
    <property type="project" value="Ensembl"/>
</dbReference>
<dbReference type="GO" id="GO:0051384">
    <property type="term" value="P:response to glucocorticoid"/>
    <property type="evidence" value="ECO:0000314"/>
    <property type="project" value="BHF-UCL"/>
</dbReference>
<dbReference type="GO" id="GO:1990268">
    <property type="term" value="P:response to gold nanoparticle"/>
    <property type="evidence" value="ECO:0007669"/>
    <property type="project" value="Ensembl"/>
</dbReference>
<dbReference type="GO" id="GO:0140460">
    <property type="term" value="P:response to Gram-negative bacterium"/>
    <property type="evidence" value="ECO:0007669"/>
    <property type="project" value="Ensembl"/>
</dbReference>
<dbReference type="GO" id="GO:0001666">
    <property type="term" value="P:response to hypoxia"/>
    <property type="evidence" value="ECO:0007669"/>
    <property type="project" value="Ensembl"/>
</dbReference>
<dbReference type="GO" id="GO:0035900">
    <property type="term" value="P:response to isolation stress"/>
    <property type="evidence" value="ECO:0007669"/>
    <property type="project" value="Ensembl"/>
</dbReference>
<dbReference type="GO" id="GO:1902065">
    <property type="term" value="P:response to L-glutamate"/>
    <property type="evidence" value="ECO:0007669"/>
    <property type="project" value="Ensembl"/>
</dbReference>
<dbReference type="GO" id="GO:0036005">
    <property type="term" value="P:response to macrophage colony-stimulating factor"/>
    <property type="evidence" value="ECO:0007669"/>
    <property type="project" value="Ensembl"/>
</dbReference>
<dbReference type="GO" id="GO:0031667">
    <property type="term" value="P:response to nutrient levels"/>
    <property type="evidence" value="ECO:0007669"/>
    <property type="project" value="Ensembl"/>
</dbReference>
<dbReference type="GO" id="GO:0009651">
    <property type="term" value="P:response to salt stress"/>
    <property type="evidence" value="ECO:0000304"/>
    <property type="project" value="BHF-UCL"/>
</dbReference>
<dbReference type="GO" id="GO:0009615">
    <property type="term" value="P:response to virus"/>
    <property type="evidence" value="ECO:0000314"/>
    <property type="project" value="BHF-UCL"/>
</dbReference>
<dbReference type="GO" id="GO:0009410">
    <property type="term" value="P:response to xenobiotic stimulus"/>
    <property type="evidence" value="ECO:0007669"/>
    <property type="project" value="Ensembl"/>
</dbReference>
<dbReference type="GO" id="GO:0003009">
    <property type="term" value="P:skeletal muscle contraction"/>
    <property type="evidence" value="ECO:0007669"/>
    <property type="project" value="Ensembl"/>
</dbReference>
<dbReference type="GO" id="GO:0034138">
    <property type="term" value="P:toll-like receptor 3 signaling pathway"/>
    <property type="evidence" value="ECO:0007669"/>
    <property type="project" value="Ensembl"/>
</dbReference>
<dbReference type="GO" id="GO:0033209">
    <property type="term" value="P:tumor necrosis factor-mediated signaling pathway"/>
    <property type="evidence" value="ECO:0000314"/>
    <property type="project" value="BHF-UCL"/>
</dbReference>
<dbReference type="GO" id="GO:0010573">
    <property type="term" value="P:vascular endothelial growth factor production"/>
    <property type="evidence" value="ECO:0000314"/>
    <property type="project" value="UniProtKB"/>
</dbReference>
<dbReference type="GO" id="GO:0042311">
    <property type="term" value="P:vasodilation"/>
    <property type="evidence" value="ECO:0007669"/>
    <property type="project" value="Ensembl"/>
</dbReference>
<dbReference type="CDD" id="cd00184">
    <property type="entry name" value="TNF"/>
    <property type="match status" value="1"/>
</dbReference>
<dbReference type="FunFam" id="2.60.120.40:FF:000007">
    <property type="entry name" value="Tumor necrosis factor"/>
    <property type="match status" value="1"/>
</dbReference>
<dbReference type="Gene3D" id="2.60.120.40">
    <property type="match status" value="1"/>
</dbReference>
<dbReference type="InterPro" id="IPR006053">
    <property type="entry name" value="TNF"/>
</dbReference>
<dbReference type="InterPro" id="IPR002959">
    <property type="entry name" value="TNF_alpha"/>
</dbReference>
<dbReference type="InterPro" id="IPR021184">
    <property type="entry name" value="TNF_CS"/>
</dbReference>
<dbReference type="InterPro" id="IPR006052">
    <property type="entry name" value="TNF_dom"/>
</dbReference>
<dbReference type="InterPro" id="IPR008983">
    <property type="entry name" value="Tumour_necrosis_fac-like_dom"/>
</dbReference>
<dbReference type="PANTHER" id="PTHR11471:SF23">
    <property type="entry name" value="TUMOR NECROSIS FACTOR"/>
    <property type="match status" value="1"/>
</dbReference>
<dbReference type="PANTHER" id="PTHR11471">
    <property type="entry name" value="TUMOR NECROSIS FACTOR FAMILY MEMBER"/>
    <property type="match status" value="1"/>
</dbReference>
<dbReference type="Pfam" id="PF00229">
    <property type="entry name" value="TNF"/>
    <property type="match status" value="1"/>
</dbReference>
<dbReference type="PRINTS" id="PR01234">
    <property type="entry name" value="TNECROSISFCT"/>
</dbReference>
<dbReference type="PRINTS" id="PR01235">
    <property type="entry name" value="TNFALPHA"/>
</dbReference>
<dbReference type="SMART" id="SM00207">
    <property type="entry name" value="TNF"/>
    <property type="match status" value="1"/>
</dbReference>
<dbReference type="SUPFAM" id="SSF49842">
    <property type="entry name" value="TNF-like"/>
    <property type="match status" value="1"/>
</dbReference>
<dbReference type="PROSITE" id="PS00251">
    <property type="entry name" value="THD_1"/>
    <property type="match status" value="1"/>
</dbReference>
<dbReference type="PROSITE" id="PS50049">
    <property type="entry name" value="THD_2"/>
    <property type="match status" value="1"/>
</dbReference>
<proteinExistence type="evidence at protein level"/>
<evidence type="ECO:0000250" key="1">
    <source>
        <dbReference type="UniProtKB" id="P06804"/>
    </source>
</evidence>
<evidence type="ECO:0000255" key="2"/>
<evidence type="ECO:0000255" key="3">
    <source>
        <dbReference type="PROSITE-ProRule" id="PRU01387"/>
    </source>
</evidence>
<evidence type="ECO:0000269" key="4">
    <source>
    </source>
</evidence>
<evidence type="ECO:0000269" key="5">
    <source>
    </source>
</evidence>
<evidence type="ECO:0000269" key="6">
    <source>
    </source>
</evidence>
<evidence type="ECO:0000269" key="7">
    <source>
    </source>
</evidence>
<evidence type="ECO:0000269" key="8">
    <source>
    </source>
</evidence>
<evidence type="ECO:0000269" key="9">
    <source>
    </source>
</evidence>
<evidence type="ECO:0000269" key="10">
    <source>
    </source>
</evidence>
<evidence type="ECO:0000269" key="11">
    <source>
    </source>
</evidence>
<evidence type="ECO:0000269" key="12">
    <source>
    </source>
</evidence>
<evidence type="ECO:0000269" key="13">
    <source>
    </source>
</evidence>
<evidence type="ECO:0000269" key="14">
    <source>
    </source>
</evidence>
<evidence type="ECO:0000269" key="15">
    <source>
    </source>
</evidence>
<evidence type="ECO:0000269" key="16">
    <source>
    </source>
</evidence>
<evidence type="ECO:0000269" key="17">
    <source>
    </source>
</evidence>
<evidence type="ECO:0000269" key="18">
    <source>
    </source>
</evidence>
<evidence type="ECO:0000269" key="19">
    <source ref="13"/>
</evidence>
<evidence type="ECO:0000305" key="20"/>
<evidence type="ECO:0007829" key="21">
    <source>
        <dbReference type="PDB" id="1A8M"/>
    </source>
</evidence>
<evidence type="ECO:0007829" key="22">
    <source>
        <dbReference type="PDB" id="2ZJC"/>
    </source>
</evidence>
<evidence type="ECO:0007829" key="23">
    <source>
        <dbReference type="PDB" id="2ZPX"/>
    </source>
</evidence>
<evidence type="ECO:0007829" key="24">
    <source>
        <dbReference type="PDB" id="4TSV"/>
    </source>
</evidence>
<evidence type="ECO:0007829" key="25">
    <source>
        <dbReference type="PDB" id="5M2I"/>
    </source>
</evidence>
<evidence type="ECO:0007829" key="26">
    <source>
        <dbReference type="PDB" id="5M2J"/>
    </source>
</evidence>
<evidence type="ECO:0007829" key="27">
    <source>
        <dbReference type="PDB" id="5UUI"/>
    </source>
</evidence>
<evidence type="ECO:0007829" key="28">
    <source>
        <dbReference type="PDB" id="7ASY"/>
    </source>
</evidence>
<evidence type="ECO:0007829" key="29">
    <source>
        <dbReference type="PDB" id="7TA6"/>
    </source>
</evidence>
<organism>
    <name type="scientific">Homo sapiens</name>
    <name type="common">Human</name>
    <dbReference type="NCBI Taxonomy" id="9606"/>
    <lineage>
        <taxon>Eukaryota</taxon>
        <taxon>Metazoa</taxon>
        <taxon>Chordata</taxon>
        <taxon>Craniata</taxon>
        <taxon>Vertebrata</taxon>
        <taxon>Euteleostomi</taxon>
        <taxon>Mammalia</taxon>
        <taxon>Eutheria</taxon>
        <taxon>Euarchontoglires</taxon>
        <taxon>Primates</taxon>
        <taxon>Haplorrhini</taxon>
        <taxon>Catarrhini</taxon>
        <taxon>Hominidae</taxon>
        <taxon>Homo</taxon>
    </lineage>
</organism>
<accession>P01375</accession>
<accession>O43647</accession>
<accession>Q9P1Q2</accession>
<accession>Q9UIV3</accession>
<sequence length="233" mass="25644">MSTESMIRDVELAEEALPKKTGGPQGSRRCLFLSLFSFLIVAGATTLFCLLHFGVIGPQREEFPRDLSLISPLAQAVRSSSRTPSDKPVAHVVANPQAEGQLQWLNRRANALLANGVELRDNQLVVPSEGLYLIYSQVLFKGQGCPSTHVLLTHTISRIAVSYQTKVNLLSAIKSPCQRETPEGAEAKPWYEPIYLGGVFQLEKGDRLSAEINRPDYLDFAESGQVYFGIIAL</sequence>
<name>TNFA_HUMAN</name>
<reference key="1">
    <citation type="journal article" date="1986" name="Cold Spring Harb. Symp. Quant. Biol.">
        <title>Tandem arrangement of genes coding for tumor necrosis factor (TNF-alpha) and lymphotoxin (TNF-beta) in the human genome.</title>
        <authorList>
            <person name="Nedospasov S.A."/>
            <person name="Shakhov A.N."/>
            <person name="Turetskaya R.L."/>
            <person name="Mett V.A."/>
            <person name="Azizov M.M."/>
            <person name="Georgiev G.P."/>
            <person name="Korobko V.G."/>
            <person name="Dobrynin V.N."/>
            <person name="Filippov S.A."/>
            <person name="Bystrov N.S."/>
            <person name="Boldyreva E.F."/>
            <person name="Chuvpilo S.A."/>
            <person name="Chumakov A.M."/>
            <person name="Shingarova L.N."/>
            <person name="Ovchinnikov Y.A."/>
        </authorList>
    </citation>
    <scope>NUCLEOTIDE SEQUENCE [GENOMIC DNA]</scope>
</reference>
<reference key="2">
    <citation type="journal article" date="1984" name="Nature">
        <title>Human tumour necrosis factor: precursor structure, expression and homology to lymphotoxin.</title>
        <authorList>
            <person name="Pennica D."/>
            <person name="Nedwin G.E."/>
            <person name="Hayflick J.S."/>
            <person name="Seeburg P.H."/>
            <person name="Derynck R."/>
            <person name="Palladino M.A."/>
            <person name="Kohr W.J."/>
            <person name="Aggarwal B.B."/>
            <person name="Goeddel D.V."/>
        </authorList>
    </citation>
    <scope>NUCLEOTIDE SEQUENCE [GENOMIC DNA / MRNA]</scope>
</reference>
<reference key="3">
    <citation type="journal article" date="1985" name="Nature">
        <title>Cloning and expression in Escherichia coli of the gene for human tumour necrosis factor.</title>
        <authorList>
            <person name="Shirai T."/>
            <person name="Yamaguchi H."/>
            <person name="Ito H."/>
            <person name="Todd C.W."/>
            <person name="Wallace R.B."/>
        </authorList>
    </citation>
    <scope>NUCLEOTIDE SEQUENCE [GENOMIC DNA / MRNA]</scope>
</reference>
<reference key="4">
    <citation type="journal article" date="1985" name="Nucleic Acids Res.">
        <title>Human lymphotoxin and tumor necrosis factor genes: structure, homology and chromosomal localization.</title>
        <authorList>
            <person name="Nedwin G.E."/>
            <person name="Naylor S.L."/>
            <person name="Sakaguchi A.Y."/>
            <person name="Smith D.H."/>
            <person name="Jarrett-Nedwin J."/>
            <person name="Pennica D."/>
            <person name="Goeddel D.V."/>
            <person name="Gray P.W."/>
        </authorList>
    </citation>
    <scope>NUCLEOTIDE SEQUENCE [GENOMIC DNA / MRNA]</scope>
</reference>
<reference key="5">
    <citation type="journal article" date="1985" name="Science">
        <title>Molecular cloning of the complementary DNA for human tumor necrosis factor.</title>
        <authorList>
            <person name="Wang A.M."/>
            <person name="Creasey A.A."/>
            <person name="Ladner M.B."/>
            <person name="Lin L.S."/>
            <person name="Strickler J."/>
            <person name="van Arsdell J.N."/>
            <person name="Yamamoto R."/>
            <person name="Mark D.F."/>
        </authorList>
    </citation>
    <scope>NUCLEOTIDE SEQUENCE [MRNA]</scope>
</reference>
<reference key="6">
    <citation type="journal article" date="1985" name="Eur. J. Biochem.">
        <title>Molecular cloning and expression of human tumor necrosis factor and comparison with mouse tumor necrosis factor.</title>
        <authorList>
            <person name="Marmenout A."/>
            <person name="Fransen L."/>
            <person name="Tavernier J."/>
            <person name="van der Heyden J."/>
            <person name="Tizard R."/>
            <person name="Kawashima E."/>
            <person name="Shaw A."/>
            <person name="Johnson M.J."/>
            <person name="Semon D."/>
            <person name="Mueller R."/>
            <person name="Ruysschaert M.-R."/>
            <person name="van Vliet A."/>
            <person name="Fiers W."/>
        </authorList>
    </citation>
    <scope>NUCLEOTIDE SEQUENCE [GENOMIC DNA]</scope>
</reference>
<reference key="7">
    <citation type="journal article" date="1993" name="Nat. Genet.">
        <title>Dense Alu clustering and a potential new member of the NF kappa B family within a 90 kilobase HLA class III segment.</title>
        <authorList>
            <person name="Iris F.J.M."/>
            <person name="Bougueleret L."/>
            <person name="Prieur S."/>
            <person name="Caterina D."/>
            <person name="Primas G."/>
            <person name="Perrot V."/>
            <person name="Jurka J."/>
            <person name="Rodriguez-Tome P."/>
            <person name="Claverie J.-M."/>
            <person name="Dausset J."/>
            <person name="Cohen D."/>
        </authorList>
    </citation>
    <scope>NUCLEOTIDE SEQUENCE [GENOMIC DNA]</scope>
</reference>
<reference key="8">
    <citation type="journal article" date="1999" name="J. Immunol.">
        <title>A new member of the Ig superfamily and a V-ATPase G subunit are among the predicted products of novel genes close to the TNF locus in the human MHC.</title>
        <authorList>
            <person name="Neville M.J."/>
            <person name="Campbell R.D."/>
        </authorList>
    </citation>
    <scope>NUCLEOTIDE SEQUENCE [GENOMIC DNA]</scope>
</reference>
<reference key="9">
    <citation type="journal article" date="2003" name="Genome Res.">
        <title>Analysis of the gene-dense major histocompatibility complex class III region and its comparison to mouse.</title>
        <authorList>
            <person name="Xie T."/>
            <person name="Rowen L."/>
            <person name="Aguado B."/>
            <person name="Ahearn M.E."/>
            <person name="Madan A."/>
            <person name="Qin S."/>
            <person name="Campbell R.D."/>
            <person name="Hood L."/>
        </authorList>
    </citation>
    <scope>NUCLEOTIDE SEQUENCE [LARGE SCALE GENOMIC DNA]</scope>
</reference>
<reference key="10">
    <citation type="submission" date="1999-09" db="EMBL/GenBank/DDBJ databases">
        <title>Homo sapiens 2,229,817bp genomic DNA of 6p21.3 HLA class I region.</title>
        <authorList>
            <person name="Shiina S."/>
            <person name="Tamiya G."/>
            <person name="Oka A."/>
            <person name="Inoko H."/>
        </authorList>
    </citation>
    <scope>NUCLEOTIDE SEQUENCE [LARGE SCALE GENOMIC DNA]</scope>
</reference>
<reference key="11">
    <citation type="submission" date="2002-07" db="EMBL/GenBank/DDBJ databases">
        <title>Genome diversity in HLA: a new strategy for detection of genetic polymorphisms in expressed genes within the HLA class III and class I regions.</title>
        <authorList>
            <person name="Shiina T."/>
            <person name="Ota M."/>
            <person name="Katsuyama Y."/>
            <person name="Hashimoto N."/>
            <person name="Inoko H."/>
        </authorList>
    </citation>
    <scope>NUCLEOTIDE SEQUENCE [LARGE SCALE GENOMIC DNA]</scope>
</reference>
<reference key="12">
    <citation type="submission" date="2001-12" db="EMBL/GenBank/DDBJ databases">
        <authorList>
            <consortium name="SeattleSNPs variation discovery resource"/>
        </authorList>
    </citation>
    <scope>NUCLEOTIDE SEQUENCE [GENOMIC DNA]</scope>
</reference>
<reference key="13">
    <citation type="submission" date="2003-01" db="EMBL/GenBank/DDBJ databases">
        <authorList>
            <consortium name="NIEHS SNPs program"/>
        </authorList>
    </citation>
    <scope>NUCLEOTIDE SEQUENCE [GENOMIC DNA]</scope>
    <scope>VARIANT LEU-84</scope>
</reference>
<reference key="14">
    <citation type="journal article" date="2004" name="Genome Res.">
        <title>The status, quality, and expansion of the NIH full-length cDNA project: the Mammalian Gene Collection (MGC).</title>
        <authorList>
            <consortium name="The MGC Project Team"/>
        </authorList>
    </citation>
    <scope>NUCLEOTIDE SEQUENCE [LARGE SCALE MRNA]</scope>
    <source>
        <tissue>Blood</tissue>
    </source>
</reference>
<reference key="15">
    <citation type="journal article" date="1996" name="Eur. J. Biochem.">
        <title>O-glycosylated species of natural human tumor-necrosis factor-alpha.</title>
        <authorList>
            <person name="Takakura-Yamamoto R."/>
            <person name="Yamamoto S."/>
            <person name="Fukuda S."/>
            <person name="Kurimoto M."/>
        </authorList>
    </citation>
    <scope>PROTEIN SEQUENCE OF 77-99</scope>
    <scope>GLYCOSYLATION AT SER-80</scope>
</reference>
<reference key="16">
    <citation type="submission" date="1998-01" db="EMBL/GenBank/DDBJ databases">
        <authorList>
            <person name="Jang J.S."/>
            <person name="Kim B.E."/>
        </authorList>
    </citation>
    <scope>NUCLEOTIDE SEQUENCE [MRNA] OF 77-233</scope>
</reference>
<reference key="17">
    <citation type="submission" date="2000-03" db="EMBL/GenBank/DDBJ databases">
        <authorList>
            <person name="Shao C."/>
            <person name="Yan W."/>
            <person name="Zhu F."/>
            <person name="Yue W."/>
            <person name="Chai Y."/>
            <person name="Zhao Z."/>
            <person name="Wang C."/>
        </authorList>
    </citation>
    <scope>NUCLEOTIDE SEQUENCE [MRNA] OF 84-214</scope>
    <source>
        <tissue>Prostatic carcinoma</tissue>
    </source>
</reference>
<reference key="18">
    <citation type="journal article" date="1995" name="J. Inflamm.">
        <title>Phosphorylation of the 26 kDa TNF precursor in monocytic cells and in transfected HeLa cells.</title>
        <authorList>
            <person name="Pocsik E."/>
            <person name="Duda E."/>
            <person name="Wallach D."/>
        </authorList>
    </citation>
    <scope>PHOSPHORYLATION (MEMBRANE FORM)</scope>
</reference>
<reference key="19">
    <citation type="journal article" date="1999" name="EMBO J.">
        <title>A casein kinase I motif present in the cytoplasmic domain of members of the tumour necrosis factor ligand family is implicated in 'reverse signalling'.</title>
        <authorList>
            <person name="Watts A.D."/>
            <person name="Hunt N.H."/>
            <person name="Wanigasekara Y."/>
            <person name="Bloomfield G."/>
            <person name="Wallach D."/>
            <person name="Roufogalis B.D."/>
            <person name="Chaudhri G."/>
        </authorList>
    </citation>
    <scope>PHOSPHORYLATION BY CK1</scope>
    <scope>DEPHOSPHORYLATION</scope>
</reference>
<reference key="20">
    <citation type="journal article" date="1991" name="EMBO J.">
        <title>Localization of the active site of human tumour necrosis factor (hTNF) by mutational analysis.</title>
        <authorList>
            <person name="Ostade X.V."/>
            <person name="Tavernier J."/>
            <person name="Prange T."/>
            <person name="Fiers W."/>
        </authorList>
    </citation>
    <scope>MUTAGENESIS</scope>
</reference>
<reference key="21">
    <citation type="journal article" date="1992" name="J. Exp. Med.">
        <title>Myristyl acylation of the tumor necrosis factor alpha precursor on specific lysine residues.</title>
        <authorList>
            <person name="Stevenson F.T."/>
            <person name="Bursten S.L."/>
            <person name="Locksley R.M."/>
            <person name="Lovett D.H."/>
        </authorList>
    </citation>
    <scope>MYRISTOYLATION AT LYS-19 AND LYS-20</scope>
</reference>
<reference key="22">
    <citation type="journal article" date="1997" name="Nature">
        <title>Cloning of a disintegrin metalloproteinase that processes precursor tumour-necrosis factor-alpha.</title>
        <authorList>
            <person name="Moss M.L."/>
            <person name="Jin S.-L.C."/>
            <person name="Milla M.E."/>
            <person name="Burkhart W."/>
            <person name="Carter H.L."/>
            <person name="Chen W.-J."/>
            <person name="Clay W.C."/>
            <person name="Didsbury J.R."/>
            <person name="Hassler D."/>
            <person name="Hoffman C.R."/>
            <person name="Kost T.A."/>
            <person name="Lambert M.H."/>
            <person name="Leesnitzer M.A."/>
            <person name="McCauley P."/>
            <person name="McGeehan G."/>
            <person name="Mitchell J."/>
            <person name="Moyer M."/>
            <person name="Pahel G."/>
            <person name="Rocque W."/>
            <person name="Overton L.K."/>
            <person name="Schoenen F."/>
            <person name="Seaton T."/>
            <person name="Su J.-L."/>
            <person name="Warner J."/>
            <person name="Willard D."/>
            <person name="Becherer J.D."/>
        </authorList>
    </citation>
    <scope>CLEAVAGE BY ADAM17</scope>
</reference>
<reference key="23">
    <citation type="journal article" date="1999" name="Nat. Genet.">
        <title>A polymorphism that affects OCT-1 binding to the TNF promoter region is associated with severe malaria.</title>
        <authorList>
            <person name="Knight J.C."/>
            <person name="Udalova I."/>
            <person name="Hill A.V."/>
            <person name="Greenwood B.M."/>
            <person name="Peshu N."/>
            <person name="Marsh K."/>
            <person name="Kwiatkowski D."/>
        </authorList>
    </citation>
    <scope>POLYMORPHISM</scope>
    <scope>INVOLVEMENT IN SUSCEPTIBILITY TO MALARIA</scope>
</reference>
<reference key="24">
    <citation type="journal article" date="2003" name="Arthritis Rheum.">
        <title>Cytokine gene polymorphisms: association with psoriatic arthritis susceptibility and severity.</title>
        <authorList>
            <person name="Balding J."/>
            <person name="Kane D."/>
            <person name="Livingstone W."/>
            <person name="Mynett-Johnson L."/>
            <person name="Bresnihan B."/>
            <person name="Smith O."/>
            <person name="FitzGerald O."/>
        </authorList>
    </citation>
    <scope>INVOLVEMENT IN PSORIATIC ARTHRITIS SUSCEPTIBILITY</scope>
</reference>
<reference key="25">
    <citation type="journal article" date="2003" name="Arthritis Rheum.">
        <title>Anti-interleukin-6 receptor antibody therapy reduces vascular endothelial growth factor production in rheumatoid arthritis.</title>
        <authorList>
            <person name="Nakahara H."/>
            <person name="Song J."/>
            <person name="Sugimoto M."/>
            <person name="Hagihara K."/>
            <person name="Kishimoto T."/>
            <person name="Yoshizaki K."/>
            <person name="Nishimoto N."/>
        </authorList>
    </citation>
    <scope>FUNCTION</scope>
</reference>
<reference key="26">
    <citation type="journal article" date="2003" name="Hum. Mol. Genet.">
        <title>Association of TNF-alpha promoter polymorphisms with the clearance of hepatitis B virus infection.</title>
        <authorList>
            <person name="Kim Y.J."/>
            <person name="Lee H.-S."/>
            <person name="Yoon J.-H."/>
            <person name="Kim C.Y."/>
            <person name="Park M.H."/>
            <person name="Kim L.H."/>
            <person name="Park B.L."/>
            <person name="Shin H.D."/>
        </authorList>
    </citation>
    <scope>INVOLVEMENT IN SUSCEPTIBILITY TO HBV INFECTION</scope>
</reference>
<reference key="27">
    <citation type="journal article" date="2006" name="Nat. Cell Biol.">
        <title>SPPL2a and SPPL2b promote intramembrane proteolysis of TNFalpha in activated dendritic cells to trigger IL-12 production.</title>
        <authorList>
            <person name="Friedmann E."/>
            <person name="Hauben E."/>
            <person name="Maylandt K."/>
            <person name="Schleeger S."/>
            <person name="Vreugde S."/>
            <person name="Lichtenthaler S.F."/>
            <person name="Kuhn P.H."/>
            <person name="Stauffer D."/>
            <person name="Rovelli G."/>
            <person name="Martoglio B."/>
        </authorList>
    </citation>
    <scope>FUNCTION OF TNF INTRACELLULAR DOMAIN</scope>
    <scope>CLEAVAGE BY SPPL2A AND SPPL2B</scope>
    <scope>SUBCELLULAR LOCATION</scope>
</reference>
<reference key="28">
    <citation type="journal article" date="2006" name="Nat. Cell Biol.">
        <title>A gamma-secretase-like intramembrane cleavage of TNFalpha by the GxGD aspartyl protease SPPL2b.</title>
        <authorList>
            <person name="Fluhrer R."/>
            <person name="Grammer G."/>
            <person name="Israel L."/>
            <person name="Condron M.M."/>
            <person name="Haffner C."/>
            <person name="Friedmann E."/>
            <person name="Bohland C."/>
            <person name="Imhof A."/>
            <person name="Martoglio B."/>
            <person name="Teplow D.B."/>
            <person name="Haass C."/>
        </authorList>
    </citation>
    <scope>CLEAVAGE BY SPPL2A AND SPPL2B</scope>
    <scope>CLEAVAGE SITE</scope>
    <scope>INTERACTION WITH SPPL2B</scope>
    <scope>IDENTIFICATION BY MASS SPECTROMETRY</scope>
</reference>
<reference key="29">
    <citation type="journal article" date="2012" name="J. Leukoc. Biol.">
        <title>Smac mimetic enables the anticancer action of BCG-stimulated neutrophils through TNF-alpha but not through TRAIL and FasL.</title>
        <authorList>
            <person name="Jinesh G.G."/>
            <person name="Chunduru S."/>
            <person name="Kamat A.M."/>
        </authorList>
    </citation>
    <scope>FUNCTION</scope>
</reference>
<reference key="30">
    <citation type="journal article" date="2013" name="Nature">
        <title>SIRT6 regulates TNF-alpha secretion through hydrolysis of long-chain fatty acyl lysine.</title>
        <authorList>
            <person name="Jiang H."/>
            <person name="Khan S."/>
            <person name="Wang Y."/>
            <person name="Charron G."/>
            <person name="He B."/>
            <person name="Sebastian C."/>
            <person name="Du J."/>
            <person name="Kim R."/>
            <person name="Ge E."/>
            <person name="Mostoslavsky R."/>
            <person name="Hang H.C."/>
            <person name="Hao Q."/>
            <person name="Lin H."/>
        </authorList>
    </citation>
    <scope>MYRISTOYLATION AT LYS-19 AND LYS-20</scope>
    <scope>DEMYRISTOYLATION AT LYS-19 AND LYS-20</scope>
    <scope>SUBCELLULAR LOCATION (TUMOR NECROSIS FACTOR</scope>
    <scope>SOLUBLE FORM)</scope>
    <scope>MUTAGENESIS OF 19-LYS-LYS-20</scope>
</reference>
<reference key="31">
    <citation type="journal article" date="2013" name="Nat. Med.">
        <title>Phosphorylation of FOXP3 controls regulatory T cell function and is inhibited by TNF-alpha in rheumatoid arthritis.</title>
        <authorList>
            <person name="Nie H."/>
            <person name="Zheng Y."/>
            <person name="Li R."/>
            <person name="Guo T.B."/>
            <person name="He D."/>
            <person name="Fang L."/>
            <person name="Liu X."/>
            <person name="Xiao L."/>
            <person name="Chen X."/>
            <person name="Wan B."/>
            <person name="Chin Y.E."/>
            <person name="Zhang J.Z."/>
        </authorList>
    </citation>
    <scope>FUNCTION</scope>
</reference>
<reference key="32">
    <citation type="journal article" date="2024" name="Nature">
        <title>Tuberculosis in otherwise healthy adults with inherited TNF deficiency.</title>
        <authorList>
            <person name="Arias A.A."/>
            <person name="Neehus A.L."/>
            <person name="Ogishi M."/>
            <person name="Meynier V."/>
            <person name="Krebs A."/>
            <person name="Lazarov T."/>
            <person name="Lee A.M."/>
            <person name="Arango-Franco C.A."/>
            <person name="Yang R."/>
            <person name="Orrego J."/>
            <person name="Corcini Berndt M."/>
            <person name="Rojas J."/>
            <person name="Li H."/>
            <person name="Rinchai D."/>
            <person name="Erazo-Borras L."/>
            <person name="Han J.E."/>
            <person name="Pillay B."/>
            <person name="Ponsin K."/>
            <person name="Chaldebas M."/>
            <person name="Philippot Q."/>
            <person name="Bohlen J."/>
            <person name="Rosain J."/>
            <person name="Le Voyer T."/>
            <person name="Janotte T."/>
            <person name="Amarajeeva K."/>
            <person name="Soudee C."/>
            <person name="Brollo M."/>
            <person name="Wiegmann K."/>
            <person name="Marquant Q."/>
            <person name="Seeleuthner Y."/>
            <person name="Lee D."/>
            <person name="Laine C."/>
            <person name="Kloos D."/>
            <person name="Bailey R."/>
            <person name="Bastard P."/>
            <person name="Keating N."/>
            <person name="Rapaport F."/>
            <person name="Khan T."/>
            <person name="Moncada-Velez M."/>
            <person name="Carmona M.C."/>
            <person name="Obando C."/>
            <person name="Alvarez J."/>
            <person name="Catano J.C."/>
            <person name="Martinez-Rosado L.L."/>
            <person name="Sanchez J.P."/>
            <person name="Tejada-Giraldo M."/>
            <person name="L'Honneur A.S."/>
            <person name="Agudelo M.L."/>
            <person name="Perez-Zapata L.J."/>
            <person name="Arboleda D.M."/>
            <person name="Alzate J.F."/>
            <person name="Cabarcas F."/>
            <person name="Zuluaga A."/>
            <person name="Pelham S.J."/>
            <person name="Ensser A."/>
            <person name="Schmidt M."/>
            <person name="Velasquez-Lopera M.M."/>
            <person name="Jouanguy E."/>
            <person name="Puel A."/>
            <person name="Kroenke M."/>
            <person name="Ghirardello S."/>
            <person name="Borghesi A."/>
            <person name="Pahari S."/>
            <person name="Boisson B."/>
            <person name="Pittaluga S."/>
            <person name="Ma C.S."/>
            <person name="Emile J.F."/>
            <person name="Notarangelo L.D."/>
            <person name="Tangye S.G."/>
            <person name="Marr N."/>
            <person name="Lachmann N."/>
            <person name="Salvator H."/>
            <person name="Schlesinger L.S."/>
            <person name="Zhang P."/>
            <person name="Glickman M.S."/>
            <person name="Nathan C.F."/>
            <person name="Geissmann F."/>
            <person name="Abel L."/>
            <person name="Franco J.L."/>
            <person name="Bustamante J."/>
            <person name="Casanova J.L."/>
            <person name="Boisson-Dupuis S."/>
        </authorList>
    </citation>
    <scope>INVOLVEMENT IN IMD127</scope>
</reference>
<reference key="33">
    <citation type="journal article" date="1989" name="Nature">
        <title>Structure of tumour necrosis factor.</title>
        <authorList>
            <person name="Jones E.Y."/>
            <person name="Stuart D.I."/>
            <person name="Walker N.P."/>
        </authorList>
    </citation>
    <scope>X-RAY CRYSTALLOGRAPHY (2.9 ANGSTROMS)</scope>
</reference>
<reference key="34">
    <citation type="journal article" date="1990" name="J. Cell Sci. Suppl.">
        <title>The structure of tumour necrosis factor -- implications for biological function.</title>
        <authorList>
            <person name="Jones E.Y."/>
            <person name="Stuart D.I."/>
            <person name="Walker N.P."/>
        </authorList>
    </citation>
    <scope>X-RAY CRYSTALLOGRAPHY (2.9 ANGSTROMS)</scope>
</reference>
<reference key="35">
    <citation type="journal article" date="1989" name="J. Biol. Chem.">
        <title>The structure of tumor necrosis factor-alpha at 2.6-A resolution. Implications for receptor binding.</title>
        <authorList>
            <person name="Eck M.J."/>
            <person name="Sprang S.R."/>
        </authorList>
    </citation>
    <scope>X-RAY CRYSTALLOGRAPHY (2.6 ANGSTROMS)</scope>
</reference>
<reference key="36">
    <citation type="journal article" date="1997" name="Protein Eng.">
        <title>Crystal structure of TNF-alpha mutant R31D with greater affinity for receptor R1 compared with R2.</title>
        <authorList>
            <person name="Reed C."/>
            <person name="Fu Z.Q."/>
            <person name="Wu J."/>
            <person name="Xue Y.N."/>
            <person name="Harrison R.W."/>
            <person name="Chen M.J."/>
            <person name="Weber I.T."/>
        </authorList>
    </citation>
    <scope>X-RAY CRYSTALLOGRAPHY (2.3 ANGSTROMS) OF MUTANT ARG-107</scope>
</reference>
<reference key="37">
    <citation type="journal article" date="1998" name="J. Biol. Chem.">
        <title>High resolution crystal structure of a human tumor necrosis factor-alpha mutant with low systemic toxicity.</title>
        <authorList>
            <person name="Cha S.S."/>
            <person name="Kim J.S."/>
            <person name="Cho H.S."/>
            <person name="Shin N.K."/>
            <person name="Jeong W."/>
            <person name="Shin H.C."/>
            <person name="Kim Y.J."/>
            <person name="Hahn J.H."/>
            <person name="Oh B.H."/>
        </authorList>
    </citation>
    <scope>X-RAY CRYSTALLOGRAPHY (1.8 ANGSTROMS) OF MUTANT SER-3</scope>
</reference>
<protein>
    <recommendedName>
        <fullName>Tumor necrosis factor</fullName>
    </recommendedName>
    <alternativeName>
        <fullName>Cachectin</fullName>
    </alternativeName>
    <alternativeName>
        <fullName>TNF-alpha</fullName>
    </alternativeName>
    <alternativeName>
        <fullName>Tumor necrosis factor ligand superfamily member 2</fullName>
        <shortName>TNF-a</shortName>
    </alternativeName>
    <component>
        <recommendedName>
            <fullName>Tumor necrosis factor, membrane form</fullName>
        </recommendedName>
        <alternativeName>
            <fullName>N-terminal fragment</fullName>
            <shortName>NTF</shortName>
        </alternativeName>
    </component>
    <component>
        <recommendedName>
            <fullName>Intracellular domain 1</fullName>
            <shortName>ICD1</shortName>
        </recommendedName>
    </component>
    <component>
        <recommendedName>
            <fullName>Intracellular domain 2</fullName>
            <shortName>ICD2</shortName>
        </recommendedName>
    </component>
    <component>
        <recommendedName>
            <fullName>C-domain 1</fullName>
        </recommendedName>
    </component>
    <component>
        <recommendedName>
            <fullName>C-domain 2</fullName>
        </recommendedName>
    </component>
    <component>
        <recommendedName>
            <fullName>Tumor necrosis factor, soluble form</fullName>
        </recommendedName>
    </component>
</protein>
<comment type="function">
    <text evidence="1 6 9 11 12">Cytokine that binds to TNFRSF1A/TNFR1 and TNFRSF1B/TNFBR. It is mainly secreted by macrophages and can induce cell death of certain tumor cell lines. It is potent pyrogen causing fever by direct action or by stimulation of interleukin-1 secretion and is implicated in the induction of cachexia, Under certain conditions it can stimulate cell proliferation and induce cell differentiation. Impairs regulatory T-cells (Treg) function in individuals with rheumatoid arthritis via FOXP3 dephosphorylation. Up-regulates the expression of protein phosphatase 1 (PP1), which dephosphorylates the key 'Ser-418' residue of FOXP3, thereby inactivating FOXP3 and rendering Treg cells functionally defective (PubMed:23396208). Key mediator of cell death in the anticancer action of BCG-stimulated neutrophils in combination with DIABLO/SMAC mimetic in the RT4v6 bladder cancer cell line (PubMed:16829952, PubMed:22517918, PubMed:23396208). Induces insulin resistance in adipocytes via inhibition of insulin-induced IRS1 tyrosine phosphorylation and insulin-induced glucose uptake. Induces GKAP42 protein degradation in adipocytes which is partially responsible for TNF-induced insulin resistance (By similarity). Plays a role in angiogenesis by inducing VEGF production synergistically with IL1B and IL6 (PubMed:12794819). Promotes osteoclastogenesis and therefore mediates bone resorption (By similarity).</text>
</comment>
<comment type="function">
    <text evidence="9">The TNF intracellular domain (ICD) form induces IL12 production in dendritic cells.</text>
</comment>
<comment type="subunit">
    <text evidence="8">Homotrimer. Interacts with SPPL2B.</text>
</comment>
<comment type="interaction">
    <interactant intactId="EBI-359977">
        <id>P01375</id>
    </interactant>
    <interactant intactId="EBI-77613">
        <id>P05067</id>
        <label>APP</label>
    </interactant>
    <organismsDiffer>false</organismsDiffer>
    <experiments>3</experiments>
</comment>
<comment type="interaction">
    <interactant intactId="EBI-359977">
        <id>P01375</id>
    </interactant>
    <interactant intactId="EBI-2808854">
        <id>Q92482</id>
        <label>AQP3</label>
    </interactant>
    <organismsDiffer>false</organismsDiffer>
    <experiments>3</experiments>
</comment>
<comment type="interaction">
    <interactant intactId="EBI-359977">
        <id>P01375</id>
    </interactant>
    <interactant intactId="EBI-747430">
        <id>Q9BXK5</id>
        <label>BCL2L13</label>
    </interactant>
    <organismsDiffer>false</organismsDiffer>
    <experiments>3</experiments>
</comment>
<comment type="interaction">
    <interactant intactId="EBI-359977">
        <id>P01375</id>
    </interactant>
    <interactant intactId="EBI-17953245">
        <id>Q6UXG8-3</id>
        <label>BTNL9</label>
    </interactant>
    <organismsDiffer>false</organismsDiffer>
    <experiments>3</experiments>
</comment>
<comment type="interaction">
    <interactant intactId="EBI-359977">
        <id>P01375</id>
    </interactant>
    <interactant intactId="EBI-13381098">
        <id>Q8IYJ2-2</id>
        <label>C10orf67</label>
    </interactant>
    <organismsDiffer>false</organismsDiffer>
    <experiments>3</experiments>
</comment>
<comment type="interaction">
    <interactant intactId="EBI-359977">
        <id>P01375</id>
    </interactant>
    <interactant intactId="EBI-947033">
        <id>Q8WV48</id>
        <label>CCDC107</label>
    </interactant>
    <organismsDiffer>false</organismsDiffer>
    <experiments>3</experiments>
</comment>
<comment type="interaction">
    <interactant intactId="EBI-359977">
        <id>P01375</id>
    </interactant>
    <interactant intactId="EBI-6873045">
        <id>Q6NSX1</id>
        <label>CCDC70</label>
    </interactant>
    <organismsDiffer>false</organismsDiffer>
    <experiments>3</experiments>
</comment>
<comment type="interaction">
    <interactant intactId="EBI-359977">
        <id>P01375</id>
    </interactant>
    <interactant intactId="EBI-740744">
        <id>O95471</id>
        <label>CLDN7</label>
    </interactant>
    <organismsDiffer>false</organismsDiffer>
    <experiments>3</experiments>
</comment>
<comment type="interaction">
    <interactant intactId="EBI-359977">
        <id>P01375</id>
    </interactant>
    <interactant intactId="EBI-2873246">
        <id>Q8IUN9</id>
        <label>CLEC10A</label>
    </interactant>
    <organismsDiffer>false</organismsDiffer>
    <experiments>3</experiments>
</comment>
<comment type="interaction">
    <interactant intactId="EBI-359977">
        <id>P01375</id>
    </interactant>
    <interactant intactId="EBI-6942903">
        <id>Q96BA8</id>
        <label>CREB3L1</label>
    </interactant>
    <organismsDiffer>false</organismsDiffer>
    <experiments>3</experiments>
</comment>
<comment type="interaction">
    <interactant intactId="EBI-359977">
        <id>P01375</id>
    </interactant>
    <interactant intactId="EBI-1046040">
        <id>P00387</id>
        <label>CYB5R3</label>
    </interactant>
    <organismsDiffer>false</organismsDiffer>
    <experiments>3</experiments>
</comment>
<comment type="interaction">
    <interactant intactId="EBI-359977">
        <id>P01375</id>
    </interactant>
    <interactant intactId="EBI-18304435">
        <id>Q5JX71</id>
        <label>FAM209A</label>
    </interactant>
    <organismsDiffer>false</organismsDiffer>
    <experiments>3</experiments>
</comment>
<comment type="interaction">
    <interactant intactId="EBI-359977">
        <id>P01375</id>
    </interactant>
    <interactant intactId="EBI-2833872">
        <id>O15552</id>
        <label>FFAR2</label>
    </interactant>
    <organismsDiffer>false</organismsDiffer>
    <experiments>3</experiments>
</comment>
<comment type="interaction">
    <interactant intactId="EBI-359977">
        <id>P01375</id>
    </interactant>
    <interactant intactId="EBI-12142257">
        <id>Q8TBE3</id>
        <label>FNDC9</label>
    </interactant>
    <organismsDiffer>false</organismsDiffer>
    <experiments>3</experiments>
</comment>
<comment type="interaction">
    <interactant intactId="EBI-359977">
        <id>P01375</id>
    </interactant>
    <interactant intactId="EBI-81279">
        <id>Q9Y6K9</id>
        <label>IKBKG</label>
    </interactant>
    <organismsDiffer>false</organismsDiffer>
    <experiments>3</experiments>
</comment>
<comment type="interaction">
    <interactant intactId="EBI-359977">
        <id>P01375</id>
    </interactant>
    <interactant intactId="EBI-749265">
        <id>Q8N6L0</id>
        <label>KASH5</label>
    </interactant>
    <organismsDiffer>false</organismsDiffer>
    <experiments>3</experiments>
</comment>
<comment type="interaction">
    <interactant intactId="EBI-359977">
        <id>P01375</id>
    </interactant>
    <interactant intactId="EBI-11304917">
        <id>Q8N386</id>
        <label>LRRC25</label>
    </interactant>
    <organismsDiffer>false</organismsDiffer>
    <experiments>3</experiments>
</comment>
<comment type="interaction">
    <interactant intactId="EBI-359977">
        <id>P01375</id>
    </interactant>
    <interactant intactId="EBI-18096461">
        <id>O43300</id>
        <label>LRRTM2</label>
    </interactant>
    <organismsDiffer>false</organismsDiffer>
    <experiments>3</experiments>
</comment>
<comment type="interaction">
    <interactant intactId="EBI-359977">
        <id>P01375</id>
    </interactant>
    <interactant intactId="EBI-1045440">
        <id>Q9HC36</id>
        <label>MRM3</label>
    </interactant>
    <organismsDiffer>false</organismsDiffer>
    <experiments>3</experiments>
</comment>
<comment type="interaction">
    <interactant intactId="EBI-359977">
        <id>P01375</id>
    </interactant>
    <interactant intactId="EBI-2559100">
        <id>O75459</id>
        <label>PAGE1</label>
    </interactant>
    <organismsDiffer>false</organismsDiffer>
    <experiments>3</experiments>
</comment>
<comment type="interaction">
    <interactant intactId="EBI-359977">
        <id>P01375</id>
    </interactant>
    <interactant intactId="EBI-7037612">
        <id>Q96RD7</id>
        <label>PANX1</label>
    </interactant>
    <organismsDiffer>false</organismsDiffer>
    <experiments>3</experiments>
</comment>
<comment type="interaction">
    <interactant intactId="EBI-359977">
        <id>P01375</id>
    </interactant>
    <interactant intactId="EBI-2820617">
        <id>Q8N4L2</id>
        <label>PIP4P2</label>
    </interactant>
    <organismsDiffer>false</organismsDiffer>
    <experiments>3</experiments>
</comment>
<comment type="interaction">
    <interactant intactId="EBI-359977">
        <id>P01375</id>
    </interactant>
    <interactant intactId="EBI-949945">
        <id>Q53GL0</id>
        <label>PLEKHO1</label>
    </interactant>
    <organismsDiffer>false</organismsDiffer>
    <experiments>3</experiments>
</comment>
<comment type="interaction">
    <interactant intactId="EBI-359977">
        <id>P01375</id>
    </interactant>
    <interactant intactId="EBI-2466594">
        <id>Q6ZMZ0</id>
        <label>RNF19B</label>
    </interactant>
    <organismsDiffer>false</organismsDiffer>
    <experiments>3</experiments>
</comment>
<comment type="interaction">
    <interactant intactId="EBI-359977">
        <id>P01375</id>
    </interactant>
    <interactant intactId="EBI-701862">
        <id>P31949</id>
        <label>S100A11</label>
    </interactant>
    <organismsDiffer>false</organismsDiffer>
    <experiments>4</experiments>
</comment>
<comment type="interaction">
    <interactant intactId="EBI-359977">
        <id>P01375</id>
    </interactant>
    <interactant intactId="EBI-2823305">
        <id>P80511</id>
        <label>S100A12</label>
    </interactant>
    <organismsDiffer>false</organismsDiffer>
    <experiments>4</experiments>
</comment>
<comment type="interaction">
    <interactant intactId="EBI-359977">
        <id>P01375</id>
    </interactant>
    <interactant intactId="EBI-721909">
        <id>Q99584</id>
        <label>S100A13</label>
    </interactant>
    <organismsDiffer>false</organismsDiffer>
    <experiments>3</experiments>
</comment>
<comment type="interaction">
    <interactant intactId="EBI-359977">
        <id>P01375</id>
    </interactant>
    <interactant intactId="EBI-5663627">
        <id>Q16585</id>
        <label>SGCB</label>
    </interactant>
    <organismsDiffer>false</organismsDiffer>
    <experiments>3</experiments>
</comment>
<comment type="interaction">
    <interactant intactId="EBI-359977">
        <id>P01375</id>
    </interactant>
    <interactant intactId="EBI-1573290">
        <id>Q15849</id>
        <label>SLC14A2</label>
    </interactant>
    <organismsDiffer>false</organismsDiffer>
    <experiments>3</experiments>
</comment>
<comment type="interaction">
    <interactant intactId="EBI-359977">
        <id>P01375</id>
    </interactant>
    <interactant intactId="EBI-13918058">
        <id>O14863</id>
        <label>SLC30A4</label>
    </interactant>
    <organismsDiffer>false</organismsDiffer>
    <experiments>3</experiments>
</comment>
<comment type="interaction">
    <interactant intactId="EBI-359977">
        <id>P01375</id>
    </interactant>
    <interactant intactId="EBI-17280858">
        <id>Q8WWF3</id>
        <label>SSMEM1</label>
    </interactant>
    <organismsDiffer>false</organismsDiffer>
    <experiments>3</experiments>
</comment>
<comment type="interaction">
    <interactant intactId="EBI-359977">
        <id>P01375</id>
    </interactant>
    <interactant intactId="EBI-1211440">
        <id>P27105</id>
        <label>STOM</label>
    </interactant>
    <organismsDiffer>false</organismsDiffer>
    <experiments>3</experiments>
</comment>
<comment type="interaction">
    <interactant intactId="EBI-359977">
        <id>P01375</id>
    </interactant>
    <interactant intactId="EBI-712466">
        <id>Q16623</id>
        <label>STX1A</label>
    </interactant>
    <organismsDiffer>false</organismsDiffer>
    <experiments>4</experiments>
</comment>
<comment type="interaction">
    <interactant intactId="EBI-359977">
        <id>P01375</id>
    </interactant>
    <interactant intactId="EBI-12345267">
        <id>O15393-2</id>
        <label>TMPRSS2</label>
    </interactant>
    <organismsDiffer>false</organismsDiffer>
    <experiments>3</experiments>
</comment>
<comment type="interaction">
    <interactant intactId="EBI-359977">
        <id>P01375</id>
    </interactant>
    <interactant intactId="EBI-359977">
        <id>P01375</id>
        <label>TNF</label>
    </interactant>
    <organismsDiffer>false</organismsDiffer>
    <experiments>3</experiments>
</comment>
<comment type="interaction">
    <interactant intactId="EBI-359977">
        <id>P01375</id>
    </interactant>
    <interactant intactId="EBI-299451">
        <id>P19438</id>
        <label>TNFRSF1A</label>
    </interactant>
    <organismsDiffer>false</organismsDiffer>
    <experiments>16</experiments>
</comment>
<comment type="interaction">
    <interactant intactId="EBI-359977">
        <id>P01375</id>
    </interactant>
    <interactant intactId="EBI-358983">
        <id>P20333</id>
        <label>TNFRSF1B</label>
    </interactant>
    <organismsDiffer>false</organismsDiffer>
    <experiments>2</experiments>
</comment>
<comment type="interaction">
    <interactant intactId="EBI-359977">
        <id>P01375</id>
    </interactant>
    <interactant intactId="EBI-744988">
        <id>Q9H7M9</id>
        <label>VSIR</label>
    </interactant>
    <organismsDiffer>false</organismsDiffer>
    <experiments>3</experiments>
</comment>
<comment type="interaction">
    <interactant intactId="EBI-359977">
        <id>P01375</id>
    </interactant>
    <interactant intactId="EBI-748373">
        <id>Q6PEW1</id>
        <label>ZCCHC12</label>
    </interactant>
    <organismsDiffer>false</organismsDiffer>
    <experiments>3</experiments>
</comment>
<comment type="interaction">
    <interactant intactId="EBI-359977">
        <id>P01375</id>
    </interactant>
    <interactant intactId="EBI-15810797">
        <id>Q9DHW0</id>
        <label>2L</label>
    </interactant>
    <organismsDiffer>true</organismsDiffer>
    <experiments>2</experiments>
</comment>
<comment type="interaction">
    <interactant intactId="EBI-359977">
        <id>P01375</id>
    </interactant>
    <interactant intactId="EBI-851690">
        <id>O89110</id>
        <label>Casp8</label>
    </interactant>
    <organismsDiffer>true</organismsDiffer>
    <experiments>2</experiments>
</comment>
<comment type="interaction">
    <interactant intactId="EBI-359977">
        <id>P01375</id>
    </interactant>
    <interactant intactId="EBI-7539950">
        <id>Q8UYL3</id>
        <label>crmE</label>
    </interactant>
    <organismsDiffer>true</organismsDiffer>
    <experiments>3</experiments>
</comment>
<comment type="interaction">
    <interactant intactId="EBI-359977">
        <id>P01375</id>
    </interactant>
    <interactant intactId="EBI-447960">
        <id>O88351</id>
        <label>Ikbkb</label>
    </interactant>
    <organismsDiffer>true</organismsDiffer>
    <experiments>3</experiments>
</comment>
<comment type="interaction">
    <interactant intactId="EBI-359977">
        <id>P01375</id>
    </interactant>
    <interactant intactId="EBI-529119">
        <id>Q60855</id>
        <label>Ripk1</label>
    </interactant>
    <organismsDiffer>true</organismsDiffer>
    <experiments>4</experiments>
</comment>
<comment type="interaction">
    <interactant intactId="EBI-359977">
        <id>P01375</id>
    </interactant>
    <interactant intactId="EBI-646595">
        <id>Q60769</id>
        <label>Tnfaip3</label>
    </interactant>
    <organismsDiffer>true</organismsDiffer>
    <experiments>2</experiments>
</comment>
<comment type="interaction">
    <interactant intactId="EBI-359977">
        <id>P01375</id>
    </interactant>
    <interactant intactId="EBI-518014">
        <id>P25118</id>
        <label>Tnfrsf1a</label>
    </interactant>
    <organismsDiffer>true</organismsDiffer>
    <experiments>4</experiments>
</comment>
<comment type="interaction">
    <interactant intactId="EBI-359977">
        <id>P01375</id>
    </interactant>
    <interactant intactId="EBI-1544032">
        <id>Q3U0V2</id>
        <label>Tradd</label>
    </interactant>
    <organismsDiffer>true</organismsDiffer>
    <experiments>2</experiments>
</comment>
<comment type="subcellular location">
    <subcellularLocation>
        <location evidence="9">Cell membrane</location>
        <topology evidence="9">Single-pass type II membrane protein</topology>
    </subcellularLocation>
</comment>
<comment type="subcellular location">
    <molecule>Tumor necrosis factor, membrane form</molecule>
    <subcellularLocation>
        <location>Membrane</location>
        <topology>Single-pass type II membrane protein</topology>
    </subcellularLocation>
</comment>
<comment type="subcellular location">
    <molecule>Tumor necrosis factor, soluble form</molecule>
    <subcellularLocation>
        <location evidence="13">Secreted</location>
    </subcellularLocation>
</comment>
<comment type="subcellular location">
    <molecule>C-domain 1</molecule>
    <subcellularLocation>
        <location>Secreted</location>
    </subcellularLocation>
</comment>
<comment type="subcellular location">
    <molecule>C-domain 2</molecule>
    <subcellularLocation>
        <location>Secreted</location>
    </subcellularLocation>
</comment>
<comment type="PTM">
    <text evidence="8 9 18">The soluble form derives from the membrane form by proteolytic processing. The membrane-bound form is further proteolytically processed by SPPL2A or SPPL2B through regulated intramembrane proteolysis producing TNF intracellular domains (ICD1 and ICD2) released in the cytosol and TNF C-domain 1 and C-domain 2 secreted into the extracellular space.</text>
</comment>
<comment type="PTM">
    <text evidence="4 16">The membrane form, but not the soluble form, is phosphorylated on serine residues. Dephosphorylation of the membrane form occurs by binding to soluble TNFRSF1A/TNFR1.</text>
</comment>
<comment type="PTM">
    <text evidence="17">O-glycosylated; glycans contain galactose, N-acetylgalactosamine and N-acetylneuraminic acid.</text>
</comment>
<comment type="PTM">
    <molecule>Tumor necrosis factor, soluble form</molecule>
    <text evidence="13">The soluble form is demyristoylated at Lys-19 and Lys-20 by SIRT6, promoting its secretion.</text>
</comment>
<comment type="polymorphism">
    <text>Genetic variations in TNF influence susceptibility to hepatitis B virus (HBV) infection [MIM:610424].</text>
</comment>
<comment type="polymorphism">
    <text>Genetic variations in TNF are involved in susceptibility to malaria [MIM:611162].</text>
</comment>
<comment type="disease" evidence="5">
    <disease id="DI-02697">
        <name>Psoriatic arthritis</name>
        <acronym>PSORAS</acronym>
        <description>An inflammatory, seronegative arthritis associated with psoriasis. It is a heterogeneous disorder ranging from a mild, non-destructive disease to a severe, progressive, erosive arthropathy. Five types of psoriatic arthritis have been defined: asymmetrical oligoarthritis characterized by primary involvement of the small joints of the fingers or toes; asymmetrical arthritis which involves the joints of the extremities; symmetrical polyarthritis characterized by a rheumatoid like pattern that can involve hands, wrists, ankles, and feet; arthritis mutilans, which is a rare but deforming and destructive condition; arthritis of the sacroiliac joints and spine (psoriatic spondylitis).</description>
        <dbReference type="MIM" id="607507"/>
    </disease>
    <text>Disease susceptibility is associated with variants affecting the gene represented in this entry.</text>
</comment>
<comment type="disease" evidence="15">
    <disease id="DI-06955">
        <name>Immunodeficiency 127</name>
        <acronym>IMD127</acronym>
        <description>An autosomal recessive immunologic disorder characterized by increased susceptibility to pulmonary infection with Mycobacterium tuberculosis. Affected individuals develop recurrent pulmonary tuberculosis, but have no adverse reaction to live BCG vaccination.</description>
        <dbReference type="MIM" id="620977"/>
    </disease>
    <text>The disease may be caused by variants affecting the gene represented in this entry.</text>
</comment>
<comment type="similarity">
    <text evidence="20">Belongs to the tumor necrosis factor family.</text>
</comment>
<comment type="sequence caution" evidence="20">
    <conflict type="frameshift">
        <sequence resource="EMBL-CDS" id="AAF71992"/>
    </conflict>
</comment>
<comment type="sequence caution" evidence="20">
    <conflict type="erroneous gene model prediction">
        <sequence resource="EMBL-CDS" id="CAA75070"/>
    </conflict>
</comment>
<comment type="online information" name="Wikipedia">
    <link uri="https://en.wikipedia.org/wiki/Tumor_necrosis_factor-alpha"/>
    <text>Tumor necrosis factor alpha entry</text>
</comment>
<comment type="online information" name="Atlas of Genetics and Cytogenetics in Oncology and Haematology">
    <link uri="https://atlasgeneticsoncology.org/gene/319/TNFa"/>
</comment>